<gene>
    <name evidence="43" type="primary">PDE4D</name>
    <name type="synonym">DPDE3</name>
</gene>
<comment type="function">
    <text evidence="15 16 30">Hydrolyzes the second messenger cAMP, which is a key regulator of many important physiological processes.</text>
</comment>
<comment type="catalytic activity">
    <reaction evidence="30">
        <text>3',5'-cyclic AMP + H2O = AMP + H(+)</text>
        <dbReference type="Rhea" id="RHEA:25277"/>
        <dbReference type="ChEBI" id="CHEBI:15377"/>
        <dbReference type="ChEBI" id="CHEBI:15378"/>
        <dbReference type="ChEBI" id="CHEBI:58165"/>
        <dbReference type="ChEBI" id="CHEBI:456215"/>
        <dbReference type="EC" id="3.1.4.53"/>
    </reaction>
    <physiologicalReaction direction="left-to-right" evidence="42">
        <dbReference type="Rhea" id="RHEA:25278"/>
    </physiologicalReaction>
</comment>
<comment type="cofactor">
    <cofactor evidence="11 15 16 22">
        <name>Zn(2+)</name>
        <dbReference type="ChEBI" id="CHEBI:29105"/>
    </cofactor>
    <text evidence="11 15 16 22">Binds 2 divalent metal cations per subunit. Site 1 may preferentially bind zinc ions.</text>
</comment>
<comment type="cofactor">
    <cofactor evidence="15 16">
        <name>Mg(2+)</name>
        <dbReference type="ChEBI" id="CHEBI:18420"/>
    </cofactor>
    <cofactor evidence="3">
        <name>Mn(2+)</name>
        <dbReference type="ChEBI" id="CHEBI:29035"/>
    </cofactor>
    <text evidence="3 15 16">Binds 2 divalent metal cations per subunit (PubMed:15260978, PubMed:15576036). Site 2 has a preference for magnesium and/or manganese ions (By similarity).</text>
</comment>
<comment type="activity regulation">
    <text evidence="14">Inhibited by rolipram. Activated by phosphatidic acid.</text>
</comment>
<comment type="pathway">
    <text evidence="30">Purine metabolism; 3',5'-cyclic AMP degradation; AMP from 3',5'-cyclic AMP: step 1/1.</text>
</comment>
<comment type="subunit">
    <text evidence="1 6 7 9 10 11 12 13 15 16 17 18 20 22 23 24">Homodimer for the long isoforms. Isoforms with truncated N-termini are monomeric. Isoform 3 is part of a ternary complex containing PRKAR2A, PRKAR2B and AKAP9. Interacts with PDE4DIP. Identified in a complex composed of RYR1, PDE4D, PKA, FKBP1A and protein phosphatase 1 (PP1) (By similarity). Isoform 5, isoform N3 and isoform 12 bind RACK1 via their unique N-terminus. Binds ARRB2. Interacts (via N-terminal region) with SHANK2 (via proline-rich region); the interaction is increased in a PKA-dependent manner.</text>
</comment>
<comment type="interaction">
    <interactant intactId="EBI-1642831">
        <id>Q08499</id>
    </interactant>
    <interactant intactId="EBI-714559">
        <id>P32121</id>
        <label>ARRB2</label>
    </interactant>
    <organismsDiffer>false</organismsDiffer>
    <experiments>2</experiments>
</comment>
<comment type="interaction">
    <interactant intactId="EBI-1642831">
        <id>Q08499</id>
    </interactant>
    <interactant intactId="EBI-945751">
        <id>P38432</id>
        <label>COIL</label>
    </interactant>
    <organismsDiffer>false</organismsDiffer>
    <experiments>3</experiments>
</comment>
<comment type="interaction">
    <interactant intactId="EBI-1642831">
        <id>Q08499</id>
    </interactant>
    <interactant intactId="EBI-10181276">
        <id>Q0D2H9</id>
        <label>GOLGA8DP</label>
    </interactant>
    <organismsDiffer>false</organismsDiffer>
    <experiments>3</experiments>
</comment>
<comment type="interaction">
    <interactant intactId="EBI-1642831">
        <id>Q08499</id>
    </interactant>
    <interactant intactId="EBI-10181260">
        <id>Q08AF8</id>
        <label>GOLGA8G</label>
    </interactant>
    <organismsDiffer>false</organismsDiffer>
    <experiments>3</experiments>
</comment>
<comment type="interaction">
    <interactant intactId="EBI-1642831">
        <id>Q08499</id>
    </interactant>
    <interactant intactId="EBI-1045155">
        <id>P43360</id>
        <label>MAGEA6</label>
    </interactant>
    <organismsDiffer>false</organismsDiffer>
    <experiments>3</experiments>
</comment>
<comment type="interaction">
    <interactant intactId="EBI-1642831">
        <id>Q08499</id>
    </interactant>
    <interactant intactId="EBI-1105102">
        <id>Q07343</id>
        <label>PDE4B</label>
    </interactant>
    <organismsDiffer>false</organismsDiffer>
    <experiments>2</experiments>
</comment>
<comment type="interaction">
    <interactant intactId="EBI-1642831">
        <id>Q08499</id>
    </interactant>
    <interactant intactId="EBI-359224">
        <id>Q13077</id>
        <label>TRAF1</label>
    </interactant>
    <organismsDiffer>false</organismsDiffer>
    <experiments>3</experiments>
</comment>
<comment type="interaction">
    <interactant intactId="EBI-8095525">
        <id>Q08499-2</id>
    </interactant>
    <interactant intactId="EBI-714559">
        <id>P32121</id>
        <label>ARRB2</label>
    </interactant>
    <organismsDiffer>false</organismsDiffer>
    <experiments>2</experiments>
</comment>
<comment type="interaction">
    <interactant intactId="EBI-8095525">
        <id>Q08499-2</id>
    </interactant>
    <interactant intactId="EBI-1027877">
        <id>P26769</id>
        <label>Adcy2</label>
    </interactant>
    <organismsDiffer>true</organismsDiffer>
    <experiments>3</experiments>
</comment>
<comment type="interaction">
    <interactant intactId="EBI-9090666">
        <id>Q08499-8</id>
    </interactant>
    <interactant intactId="EBI-945751">
        <id>P38432</id>
        <label>COIL</label>
    </interactant>
    <organismsDiffer>false</organismsDiffer>
    <experiments>3</experiments>
</comment>
<comment type="interaction">
    <interactant intactId="EBI-9090666">
        <id>Q08499-8</id>
    </interactant>
    <interactant intactId="EBI-748974">
        <id>Q96CV9</id>
        <label>OPTN</label>
    </interactant>
    <organismsDiffer>false</organismsDiffer>
    <experiments>3</experiments>
</comment>
<comment type="interaction">
    <interactant intactId="EBI-9090666">
        <id>Q08499-8</id>
    </interactant>
    <interactant intactId="EBI-524753">
        <id>Q8IUH5</id>
        <label>ZDHHC17</label>
    </interactant>
    <organismsDiffer>false</organismsDiffer>
    <experiments>2</experiments>
</comment>
<comment type="subcellular location">
    <subcellularLocation>
        <location evidence="10">Apical cell membrane</location>
    </subcellularLocation>
    <subcellularLocation>
        <location evidence="1">Cytoplasm</location>
    </subcellularLocation>
    <subcellularLocation>
        <location evidence="1">Membrane</location>
    </subcellularLocation>
    <subcellularLocation>
        <location evidence="1">Cytoplasm</location>
        <location evidence="1">Cytoskeleton</location>
    </subcellularLocation>
    <subcellularLocation>
        <location evidence="1">Cytoplasm</location>
        <location evidence="1">Cytoskeleton</location>
        <location evidence="1">Microtubule organizing center</location>
        <location evidence="1">Centrosome</location>
    </subcellularLocation>
    <text evidence="1">Found in the soluble fraction, associated with membranes, and associated with the cytoskeleton and the centrosome (By similarity). Colocalized with SHANK2 to the apical membrane of colonic crypt cells.</text>
</comment>
<comment type="alternative products">
    <event type="alternative splicing"/>
    <isoform>
        <id>Q08499-1</id>
        <name>4</name>
        <name>hPDE4D4</name>
        <sequence type="displayed"/>
    </isoform>
    <isoform>
        <id>Q08499-2</id>
        <name>3</name>
        <name>hPDE4D3</name>
        <sequence type="described" ref="VSP_004577"/>
    </isoform>
    <isoform>
        <id>Q08499-3</id>
        <name>10</name>
        <sequence type="described" ref="VSP_004578"/>
    </isoform>
    <isoform>
        <id>Q08499-4</id>
        <name>1</name>
        <name>hPDE4D1</name>
        <sequence type="described" ref="VSP_004579"/>
    </isoform>
    <isoform>
        <id>Q08499-5</id>
        <name>2</name>
        <name>hPDE4D2</name>
        <sequence type="described" ref="VSP_004580"/>
    </isoform>
    <isoform>
        <id>Q08499-6</id>
        <name>5</name>
        <name>hPDE4D5</name>
        <sequence type="described" ref="VSP_012384"/>
    </isoform>
    <isoform>
        <id>Q08499-7</id>
        <name>N3</name>
        <name>PDE4DN3</name>
        <sequence type="described" ref="VSP_012384 VSP_012391 VSP_012392"/>
    </isoform>
    <isoform>
        <id>Q08499-8</id>
        <name>6</name>
        <name evidence="35">PDE4D6</name>
        <sequence type="described" ref="VSP_012383 VSP_012393"/>
    </isoform>
    <isoform>
        <id>Q08499-9</id>
        <name>8</name>
        <name>PDE4D8</name>
        <sequence type="described" ref="VSP_012386 VSP_012389"/>
    </isoform>
    <isoform>
        <id>Q08499-10</id>
        <name>9</name>
        <name>PDE4D9</name>
        <sequence type="described" ref="VSP_012385 VSP_012390"/>
    </isoform>
    <isoform>
        <id>Q08499-11</id>
        <name>7</name>
        <name>PDE4D7</name>
        <sequence type="described" ref="VSP_012387 VSP_012388"/>
    </isoform>
    <isoform>
        <id>Q08499-12</id>
        <name>12</name>
        <sequence type="described" ref="VSP_012384 VSP_023326 VSP_023327"/>
    </isoform>
</comment>
<comment type="tissue specificity">
    <text evidence="8 20">Expressed in colonic epithelial cells (at protein level). Widespread; most abundant in skeletal muscle.</text>
</comment>
<comment type="tissue specificity">
    <molecule>Isoform 6</molecule>
    <text evidence="8 21">Detected in brain.</text>
</comment>
<comment type="tissue specificity">
    <molecule>Isoform 8</molecule>
    <text evidence="8">Detected in brain, placenta, lung and kidney.</text>
</comment>
<comment type="tissue specificity">
    <molecule>Isoform 7</molecule>
    <text evidence="8">Detected in heart and skeletal muscle.</text>
</comment>
<comment type="PTM">
    <text evidence="1">Long isoforms that share a conserved PKA phosphorylation site in the N-terminus are activated by PKA through phosphorylation (By similarity). Isoform 3 and isoform 7 are activated by phosphorylation (in vitro), but not isoform 6. Isoform N3 and isoform 12 are phosphorylated on Ser-49, Ser-51, Ser-55 and Ser-59.</text>
</comment>
<comment type="PTM">
    <text evidence="25">Sumoylation of long isoforms by PIAS4 augments their activation by PKA phosphorylation and represses their inhibition by ERK phosphorylation.</text>
</comment>
<comment type="disease">
    <text evidence="19">Genetic variations in PDE4D might be associated with susceptibility to stroke. PubMed:17006457 states that association with stroke has to be considered with caution.</text>
</comment>
<comment type="disease" evidence="26 27 28 29">
    <disease id="DI-03460">
        <name>Acrodysostosis 2, with or without hormone resistance</name>
        <acronym>ACRDYS2</acronym>
        <description>A pleiotropic disorder characterized by skeletal, endocrine, and neurological abnormalities. Skeletal features include brachycephaly, midface hypoplasia with a small upturned nose, brachydactyly, and lumbar spinal stenosis. Endocrine abnormalities include hypothyroidism and hypogonadism in males and irregular menses in females. Developmental disability is a common finding but is variable in severity and can be associated with significant behavioral problems.</description>
        <dbReference type="MIM" id="614613"/>
    </disease>
    <text>The disease is caused by variants affecting the gene represented in this entry.</text>
</comment>
<comment type="miscellaneous">
    <molecule>Isoform 3</molecule>
    <text evidence="41">Activated by phosphorylation at Ser-53. Mutagenesis of Ser-54 abolishes activation.</text>
</comment>
<comment type="similarity">
    <text evidence="41">Belongs to the cyclic nucleotide phosphodiesterase family. PDE4 subfamily.</text>
</comment>
<comment type="online information" name="phosphodiesterase 4D, cAMP-specific (phosphodiesterase E3 dunce homolog, Drosophila) (PDE4D)">
    <link uri="https://databases.lovd.nl/shared/genes/PDE4D"/>
    <text>Leiden Open Variation Database (LOVD)</text>
</comment>
<accession>Q08499</accession>
<accession>O43433</accession>
<accession>Q13549</accession>
<accession>Q13550</accession>
<accession>Q13551</accession>
<accession>Q7Z2L8</accession>
<accession>Q8IV84</accession>
<accession>Q8IVA9</accession>
<accession>Q8IVD2</accession>
<accession>Q8IVD3</accession>
<accession>Q96HL4</accession>
<accession>Q9HCX7</accession>
<organism>
    <name type="scientific">Homo sapiens</name>
    <name type="common">Human</name>
    <dbReference type="NCBI Taxonomy" id="9606"/>
    <lineage>
        <taxon>Eukaryota</taxon>
        <taxon>Metazoa</taxon>
        <taxon>Chordata</taxon>
        <taxon>Craniata</taxon>
        <taxon>Vertebrata</taxon>
        <taxon>Euteleostomi</taxon>
        <taxon>Mammalia</taxon>
        <taxon>Eutheria</taxon>
        <taxon>Euarchontoglires</taxon>
        <taxon>Primates</taxon>
        <taxon>Haplorrhini</taxon>
        <taxon>Catarrhini</taxon>
        <taxon>Hominidae</taxon>
        <taxon>Homo</taxon>
    </lineage>
</organism>
<evidence type="ECO:0000250" key="1"/>
<evidence type="ECO:0000250" key="2">
    <source>
        <dbReference type="UniProtKB" id="P14270"/>
    </source>
</evidence>
<evidence type="ECO:0000250" key="3">
    <source>
        <dbReference type="UniProtKB" id="Q07343"/>
    </source>
</evidence>
<evidence type="ECO:0000255" key="4">
    <source>
        <dbReference type="PROSITE-ProRule" id="PRU01192"/>
    </source>
</evidence>
<evidence type="ECO:0000256" key="5">
    <source>
        <dbReference type="SAM" id="MobiDB-lite"/>
    </source>
</evidence>
<evidence type="ECO:0000269" key="6">
    <source>
    </source>
</evidence>
<evidence type="ECO:0000269" key="7">
    <source>
    </source>
</evidence>
<evidence type="ECO:0000269" key="8">
    <source>
    </source>
</evidence>
<evidence type="ECO:0000269" key="9">
    <source>
    </source>
</evidence>
<evidence type="ECO:0000269" key="10">
    <source>
    </source>
</evidence>
<evidence type="ECO:0000269" key="11">
    <source>
    </source>
</evidence>
<evidence type="ECO:0000269" key="12">
    <source>
    </source>
</evidence>
<evidence type="ECO:0000269" key="13">
    <source>
    </source>
</evidence>
<evidence type="ECO:0000269" key="14">
    <source>
    </source>
</evidence>
<evidence type="ECO:0000269" key="15">
    <source>
    </source>
</evidence>
<evidence type="ECO:0000269" key="16">
    <source>
    </source>
</evidence>
<evidence type="ECO:0000269" key="17">
    <source>
    </source>
</evidence>
<evidence type="ECO:0000269" key="18">
    <source>
    </source>
</evidence>
<evidence type="ECO:0000269" key="19">
    <source>
    </source>
</evidence>
<evidence type="ECO:0000269" key="20">
    <source>
    </source>
</evidence>
<evidence type="ECO:0000269" key="21">
    <source>
    </source>
</evidence>
<evidence type="ECO:0000269" key="22">
    <source>
    </source>
</evidence>
<evidence type="ECO:0000269" key="23">
    <source>
    </source>
</evidence>
<evidence type="ECO:0000269" key="24">
    <source>
    </source>
</evidence>
<evidence type="ECO:0000269" key="25">
    <source>
    </source>
</evidence>
<evidence type="ECO:0000269" key="26">
    <source>
    </source>
</evidence>
<evidence type="ECO:0000269" key="27">
    <source>
    </source>
</evidence>
<evidence type="ECO:0000269" key="28">
    <source>
    </source>
</evidence>
<evidence type="ECO:0000269" key="29">
    <source>
    </source>
</evidence>
<evidence type="ECO:0000269" key="30">
    <source>
    </source>
</evidence>
<evidence type="ECO:0000303" key="31">
    <source>
    </source>
</evidence>
<evidence type="ECO:0000303" key="32">
    <source>
    </source>
</evidence>
<evidence type="ECO:0000303" key="33">
    <source>
    </source>
</evidence>
<evidence type="ECO:0000303" key="34">
    <source>
    </source>
</evidence>
<evidence type="ECO:0000303" key="35">
    <source>
    </source>
</evidence>
<evidence type="ECO:0000303" key="36">
    <source>
    </source>
</evidence>
<evidence type="ECO:0000303" key="37">
    <source>
    </source>
</evidence>
<evidence type="ECO:0000303" key="38">
    <source>
    </source>
</evidence>
<evidence type="ECO:0000303" key="39">
    <source>
    </source>
</evidence>
<evidence type="ECO:0000303" key="40">
    <source ref="9"/>
</evidence>
<evidence type="ECO:0000305" key="41"/>
<evidence type="ECO:0000305" key="42">
    <source>
    </source>
</evidence>
<evidence type="ECO:0000312" key="43">
    <source>
        <dbReference type="HGNC" id="HGNC:8783"/>
    </source>
</evidence>
<evidence type="ECO:0007744" key="44">
    <source>
        <dbReference type="PDB" id="1PTW"/>
    </source>
</evidence>
<evidence type="ECO:0007744" key="45">
    <source>
        <dbReference type="PDB" id="1TB7"/>
    </source>
</evidence>
<evidence type="ECO:0007744" key="46">
    <source>
        <dbReference type="PDB" id="1TBB"/>
    </source>
</evidence>
<evidence type="ECO:0007744" key="47">
    <source>
        <dbReference type="PDB" id="1XOM"/>
    </source>
</evidence>
<evidence type="ECO:0007744" key="48">
    <source>
        <dbReference type="PDB" id="1XON"/>
    </source>
</evidence>
<evidence type="ECO:0007744" key="49">
    <source>
        <dbReference type="PDB" id="1XOQ"/>
    </source>
</evidence>
<evidence type="ECO:0007744" key="50">
    <source>
        <dbReference type="PDB" id="1XOR"/>
    </source>
</evidence>
<evidence type="ECO:0007744" key="51">
    <source>
        <dbReference type="PDB" id="2PW3"/>
    </source>
</evidence>
<evidence type="ECO:0007744" key="52">
    <source>
    </source>
</evidence>
<evidence type="ECO:0007744" key="53">
    <source>
    </source>
</evidence>
<evidence type="ECO:0007744" key="54">
    <source>
    </source>
</evidence>
<evidence type="ECO:0007829" key="55">
    <source>
        <dbReference type="PDB" id="1E9K"/>
    </source>
</evidence>
<evidence type="ECO:0007829" key="56">
    <source>
        <dbReference type="PDB" id="1OYN"/>
    </source>
</evidence>
<evidence type="ECO:0007829" key="57">
    <source>
        <dbReference type="PDB" id="1Y2K"/>
    </source>
</evidence>
<evidence type="ECO:0007829" key="58">
    <source>
        <dbReference type="PDB" id="3G58"/>
    </source>
</evidence>
<evidence type="ECO:0007829" key="59">
    <source>
        <dbReference type="PDB" id="3SL3"/>
    </source>
</evidence>
<evidence type="ECO:0007829" key="60">
    <source>
        <dbReference type="PDB" id="5K32"/>
    </source>
</evidence>
<evidence type="ECO:0007829" key="61">
    <source>
        <dbReference type="PDB" id="6BOJ"/>
    </source>
</evidence>
<evidence type="ECO:0007829" key="62">
    <source>
        <dbReference type="PDB" id="6NJH"/>
    </source>
</evidence>
<evidence type="ECO:0007829" key="63">
    <source>
        <dbReference type="PDB" id="7ABE"/>
    </source>
</evidence>
<evidence type="ECO:0007829" key="64">
    <source>
        <dbReference type="PDB" id="8W4R"/>
    </source>
</evidence>
<name>PDE4D_HUMAN</name>
<feature type="chain" id="PRO_0000198814" description="3',5'-cyclic-AMP phosphodiesterase 4D">
    <location>
        <begin position="1"/>
        <end position="809"/>
    </location>
</feature>
<feature type="domain" description="PDEase" evidence="4">
    <location>
        <begin position="386"/>
        <end position="715"/>
    </location>
</feature>
<feature type="region of interest" description="Disordered" evidence="5">
    <location>
        <begin position="1"/>
        <end position="107"/>
    </location>
</feature>
<feature type="region of interest" description="Disordered" evidence="5">
    <location>
        <begin position="343"/>
        <end position="364"/>
    </location>
</feature>
<feature type="region of interest" description="Disordered" evidence="5">
    <location>
        <begin position="710"/>
        <end position="729"/>
    </location>
</feature>
<feature type="region of interest" description="Disordered" evidence="5">
    <location>
        <begin position="739"/>
        <end position="809"/>
    </location>
</feature>
<feature type="compositionally biased region" description="Pro residues" evidence="5">
    <location>
        <begin position="58"/>
        <end position="89"/>
    </location>
</feature>
<feature type="compositionally biased region" description="Low complexity" evidence="5">
    <location>
        <begin position="90"/>
        <end position="102"/>
    </location>
</feature>
<feature type="compositionally biased region" description="Polar residues" evidence="5">
    <location>
        <begin position="762"/>
        <end position="773"/>
    </location>
</feature>
<feature type="compositionally biased region" description="Acidic residues" evidence="5">
    <location>
        <begin position="779"/>
        <end position="796"/>
    </location>
</feature>
<feature type="active site" description="Proton donor" evidence="3">
    <location>
        <position position="462"/>
    </location>
</feature>
<feature type="binding site" evidence="22 51">
    <location>
        <position position="462"/>
    </location>
    <ligand>
        <name>3',5'-cyclic AMP</name>
        <dbReference type="ChEBI" id="CHEBI:58165"/>
    </ligand>
</feature>
<feature type="binding site" evidence="11 15 44 45">
    <location>
        <position position="462"/>
    </location>
    <ligand>
        <name>AMP</name>
        <dbReference type="ChEBI" id="CHEBI:456215"/>
    </ligand>
</feature>
<feature type="binding site" evidence="11 15 16 22 44 45 46 47 48 49 51">
    <location>
        <position position="466"/>
    </location>
    <ligand>
        <name>Zn(2+)</name>
        <dbReference type="ChEBI" id="CHEBI:29105"/>
        <label>1</label>
    </ligand>
</feature>
<feature type="binding site" evidence="11 15 16 22 44 45 46 47 48 49 50 51">
    <location>
        <position position="502"/>
    </location>
    <ligand>
        <name>Zn(2+)</name>
        <dbReference type="ChEBI" id="CHEBI:29105"/>
        <label>1</label>
    </ligand>
</feature>
<feature type="binding site" evidence="11 15 44 45">
    <location>
        <position position="503"/>
    </location>
    <ligand>
        <name>AMP</name>
        <dbReference type="ChEBI" id="CHEBI:456215"/>
    </ligand>
</feature>
<feature type="binding site" evidence="15 16 45 47 48 49 50">
    <location>
        <position position="503"/>
    </location>
    <ligand>
        <name>Mg(2+)</name>
        <dbReference type="ChEBI" id="CHEBI:18420"/>
    </ligand>
</feature>
<feature type="binding site" evidence="3">
    <location>
        <position position="503"/>
    </location>
    <ligand>
        <name>Mn(2+)</name>
        <dbReference type="ChEBI" id="CHEBI:29035"/>
    </ligand>
</feature>
<feature type="binding site" evidence="11 15 16 44 45 46 47 48 49 50">
    <location>
        <position position="503"/>
    </location>
    <ligand>
        <name>Zn(2+)</name>
        <dbReference type="ChEBI" id="CHEBI:29105"/>
        <label>1</label>
    </ligand>
</feature>
<feature type="binding site" evidence="11 44">
    <location>
        <position position="503"/>
    </location>
    <ligand>
        <name>Zn(2+)</name>
        <dbReference type="ChEBI" id="CHEBI:29105"/>
        <label>2</label>
    </ligand>
</feature>
<feature type="binding site" evidence="11 15 44 45">
    <location>
        <position position="620"/>
    </location>
    <ligand>
        <name>AMP</name>
        <dbReference type="ChEBI" id="CHEBI:456215"/>
    </ligand>
</feature>
<feature type="binding site" evidence="11 15 16 22 44 45 46 47 48 49 50 51">
    <location>
        <position position="620"/>
    </location>
    <ligand>
        <name>Zn(2+)</name>
        <dbReference type="ChEBI" id="CHEBI:29105"/>
        <label>1</label>
    </ligand>
</feature>
<feature type="binding site" evidence="11 15 44 45">
    <location>
        <position position="623"/>
    </location>
    <ligand>
        <name>AMP</name>
        <dbReference type="ChEBI" id="CHEBI:456215"/>
    </ligand>
</feature>
<feature type="binding site" evidence="22 51">
    <location>
        <position position="671"/>
    </location>
    <ligand>
        <name>3',5'-cyclic AMP</name>
        <dbReference type="ChEBI" id="CHEBI:58165"/>
    </ligand>
</feature>
<feature type="binding site" evidence="11 15 44 45">
    <location>
        <position position="671"/>
    </location>
    <ligand>
        <name>AMP</name>
        <dbReference type="ChEBI" id="CHEBI:456215"/>
    </ligand>
</feature>
<feature type="binding site" evidence="22 51">
    <location>
        <position position="674"/>
    </location>
    <ligand>
        <name>3',5'-cyclic AMP</name>
        <dbReference type="ChEBI" id="CHEBI:58165"/>
    </ligand>
</feature>
<feature type="binding site" evidence="11 44">
    <location>
        <position position="674"/>
    </location>
    <ligand>
        <name>AMP</name>
        <dbReference type="ChEBI" id="CHEBI:456215"/>
    </ligand>
</feature>
<feature type="modified residue" description="Phosphoserine" evidence="2">
    <location>
        <position position="142"/>
    </location>
</feature>
<feature type="modified residue" description="Phosphoserine" evidence="53">
    <location>
        <position position="299"/>
    </location>
</feature>
<feature type="modified residue" description="Phosphoserine" evidence="53">
    <location>
        <position position="301"/>
    </location>
</feature>
<feature type="modified residue" description="Phosphoserine" evidence="54">
    <location>
        <position position="348"/>
    </location>
</feature>
<feature type="modified residue" description="Phosphoserine" evidence="54">
    <location>
        <position position="375"/>
    </location>
</feature>
<feature type="cross-link" description="Glycyl lysine isopeptide (Lys-Gly) (interchain with G-Cter in SUMO)">
    <location>
        <position position="387"/>
    </location>
</feature>
<feature type="splice variant" id="VSP_004580" description="In isoform 2." evidence="38 39">
    <location>
        <begin position="1"/>
        <end position="302"/>
    </location>
</feature>
<feature type="splice variant" id="VSP_012383" description="In isoform 6." evidence="32 34">
    <location>
        <begin position="1"/>
        <end position="291"/>
    </location>
</feature>
<feature type="splice variant" id="VSP_004579" description="In isoform 1." evidence="38 39">
    <original>MEAEGSSAPARAGSGEGSDSAGGATLKAPKHLWRHEQHHQYPLRQPQFRLLHPHHHLPPPPPPSPQPQPQCPLQPPPPPPLPPPPPPPGAARGRYASSGATGRVRHRGYSDTERYLYCRAMDRTSYAVETGHRPGLKKSRMSWPSSFQGLRRFDVDNGTSAGRSPLDPMTSPGSGLILQANFVHSQRRESFLYRSDSDYDLSPKSMSRNSSIASDIHGDDLIVTPFAQVLASLRTVRNNFAALTNLQDRAPSKRSPMCNQPSINKATIT</original>
    <variation>MKEQPSCAGTGHPMAGYGRMAPFELASGPVKRLRTESPFPCLFA</variation>
    <location>
        <begin position="1"/>
        <end position="269"/>
    </location>
</feature>
<feature type="splice variant" id="VSP_004578" description="In isoform 10." evidence="36 39">
    <location>
        <begin position="1"/>
        <end position="205"/>
    </location>
</feature>
<feature type="splice variant" id="VSP_004577" description="In isoform 3." evidence="37 39">
    <original>MEAEGSSAPARAGSGEGSDSAGGATLKAPKHLWRHEQHHQYPLRQPQFRLLHPHHHLPPPPPPSPQPQPQCPLQPPPPPPLPPPPPPPGAARGRYASSGATGRVRHRGYSDTERYLYCRAMDRTSYAVETGHRPGLKKSRMSWPSSFQGLRR</original>
    <variation>MMHVNNFPFRRHSWIC</variation>
    <location>
        <begin position="1"/>
        <end position="152"/>
    </location>
</feature>
<feature type="splice variant" id="VSP_012384" description="In isoform 5, isoform N3 and isoform 12." evidence="31 34 39 40">
    <original>MEAEGSSAPARAGSGEGSDSAGGATLKAPKHLWRHEQHHQYPLRQPQFRLLHPHHHLPPPPPPSPQPQPQCPLQPPPPPPLPPPPPPPGAARGRYASSGATGRVRHRGYSDTERYLYCRAMDRTSYAVETGHRPGLKKSRMSWPSSFQGLRR</original>
    <variation>MAQQTSPDTLTVPEVDNPHCPNPWLNEDLVKSLRENLLQHEKSKTARKSVSPKLSPVISPRNSPRLLRRMLLSSNIPKQRRFTVAHTC</variation>
    <location>
        <begin position="1"/>
        <end position="152"/>
    </location>
</feature>
<feature type="splice variant" id="VSP_012385" description="In isoform 9." evidence="32 33">
    <location>
        <begin position="1"/>
        <end position="130"/>
    </location>
</feature>
<feature type="splice variant" id="VSP_012386" description="In isoform 8." evidence="32">
    <location>
        <begin position="1"/>
        <end position="122"/>
    </location>
</feature>
<feature type="splice variant" id="VSP_012387" description="In isoform 7." evidence="32 33">
    <location>
        <begin position="1"/>
        <end position="61"/>
    </location>
</feature>
<feature type="splice variant" id="VSP_012388" description="In isoform 7." evidence="32 33">
    <original>PPSPQPQPQCPLQPPPPPPLPPPPPPPGAARGRYASSGATGRVRHRGYSDTERYLYCRAMDRTSYAVETGHRPGLKKSRMSWPSSFQGLRR</original>
    <variation>MKRNTCDLLSRSKSASEETLHSSNEEEDPFRGMEPYLVRRLSCRNIQLPPLAFRQLEQADLKSESENIQRPTSLPLKILPLIAITSAESSG</variation>
    <location>
        <begin position="62"/>
        <end position="152"/>
    </location>
</feature>
<feature type="splice variant" id="VSP_012389" description="In isoform 8." evidence="32">
    <original>RTSYAVETGHRPGLKKSRMSWPSSFQGLRR</original>
    <variation>MAFVWDPLGATVPGPSTRAKSRLRFSKSYS</variation>
    <location>
        <begin position="123"/>
        <end position="152"/>
    </location>
</feature>
<feature type="splice variant" id="VSP_012390" description="In isoform 9." evidence="32 33">
    <original>GHRPGLKKSRMSWPSSFQGLRR</original>
    <variation>MSIIMKPRSRSTSSLRTAEAVC</variation>
    <location>
        <begin position="131"/>
        <end position="152"/>
    </location>
</feature>
<feature type="splice variant" id="VSP_023326" description="In isoform 12." evidence="34 40">
    <original>EEAYQKLASETLEE</original>
    <variation>GSWMELNPYTLLDM</variation>
    <location>
        <begin position="270"/>
        <end position="283"/>
    </location>
</feature>
<feature type="splice variant" id="VSP_012391" description="In isoform N3." evidence="31">
    <original>EEAYQKLASE</original>
    <variation>GLYNGIIAFL</variation>
    <location>
        <begin position="270"/>
        <end position="279"/>
    </location>
</feature>
<feature type="splice variant" id="VSP_012392" description="In isoform N3." evidence="31">
    <location>
        <begin position="280"/>
        <end position="809"/>
    </location>
</feature>
<feature type="splice variant" id="VSP_023327" description="In isoform 12." evidence="34 40">
    <location>
        <begin position="284"/>
        <end position="809"/>
    </location>
</feature>
<feature type="splice variant" id="VSP_012393" description="In isoform 6." evidence="32 34">
    <original>ETLQTRHSVSEMASN</original>
    <variation>MPEANYLLSVSWGYI</variation>
    <location>
        <begin position="292"/>
        <end position="306"/>
    </location>
</feature>
<feature type="sequence variant" id="VAR_068242" description="In ACRDYS2; dbSNP:rs397514466." evidence="26">
    <original>S</original>
    <variation>A</variation>
    <location>
        <position position="190"/>
    </location>
</feature>
<feature type="sequence variant" id="VAR_068243" description="In ACRDYS2; dbSNP:rs397514464." evidence="26 28">
    <original>P</original>
    <variation>T</variation>
    <location>
        <position position="225"/>
    </location>
</feature>
<feature type="sequence variant" id="VAR_068244" description="In ACRDYS2; dbSNP:rs397514465." evidence="26">
    <original>F</original>
    <variation>S</variation>
    <location>
        <position position="226"/>
    </location>
</feature>
<feature type="sequence variant" id="VAR_069448" description="In ACRDYS2." evidence="29">
    <original>A</original>
    <variation>S</variation>
    <location>
        <position position="227"/>
    </location>
</feature>
<feature type="sequence variant" id="VAR_069449" description="In ACRDYS2; dbSNP:rs397514468." evidence="27">
    <original>Q</original>
    <variation>E</variation>
    <location>
        <position position="228"/>
    </location>
</feature>
<feature type="sequence variant" id="VAR_069450" description="In ACRDYS2." evidence="28">
    <original>S</original>
    <variation>T</variation>
    <location>
        <position position="301"/>
    </location>
</feature>
<feature type="sequence variant" id="VAR_069451" description="In ACRDYS2; dbSNP:rs397515433." evidence="28">
    <original>A</original>
    <variation>V</variation>
    <location>
        <position position="304"/>
    </location>
</feature>
<feature type="sequence variant" id="VAR_069452" description="In ACRDYS2." evidence="28">
    <original>V</original>
    <variation>A</variation>
    <location>
        <position position="329"/>
    </location>
</feature>
<feature type="sequence variant" id="VAR_068245" description="In ACRDYS2; dbSNP:rs397514467." evidence="26">
    <original>T</original>
    <variation>P</variation>
    <location>
        <position position="587"/>
    </location>
</feature>
<feature type="sequence variant" id="VAR_069453" description="In ACRDYS2." evidence="27 29">
    <original>E</original>
    <variation>A</variation>
    <location>
        <position position="590"/>
    </location>
</feature>
<feature type="sequence variant" id="VAR_069454" description="In ACRDYS2; dbSNP:rs397514469." evidence="27">
    <original>G</original>
    <variation>D</variation>
    <location>
        <position position="673"/>
    </location>
</feature>
<feature type="sequence variant" id="VAR_069455" description="In ACRDYS2; dbSNP:rs587777188." evidence="28">
    <original>I</original>
    <variation>T</variation>
    <location>
        <position position="678"/>
    </location>
</feature>
<feature type="mutagenesis site" description="Decreased 3',5'-cyclic-AMP phosphodiesterase activity. Loss of Mg2(+)-binding." evidence="22">
    <original>D</original>
    <variation>N</variation>
    <location>
        <position position="503"/>
    </location>
</feature>
<feature type="mutagenesis site" description="Abolishes homodimerization." evidence="7">
    <original>D</original>
    <variation>R</variation>
    <location>
        <position position="527"/>
    </location>
</feature>
<feature type="mutagenesis site" description="Abolishes homodimerization." evidence="7">
    <original>R</original>
    <variation>D</variation>
    <location>
        <position position="563"/>
    </location>
</feature>
<feature type="sequence conflict" description="In Ref. 10; AAH36319." evidence="41" ref="10">
    <original>S</original>
    <variation>F</variation>
    <location>
        <position position="510"/>
    </location>
</feature>
<feature type="sequence conflict" description="In Ref. 6; AAN10119." evidence="41" ref="6">
    <original>D</original>
    <variation>G</variation>
    <location>
        <position position="549"/>
    </location>
</feature>
<feature type="sequence conflict" description="In Ref. 2." evidence="41" ref="2">
    <original>R</original>
    <variation>P</variation>
    <location>
        <position position="644"/>
    </location>
</feature>
<feature type="sequence conflict" description="In Ref. 3; AAA97890/AAA97891/AAA97892." evidence="41" ref="3">
    <original>C</original>
    <variation>R</variation>
    <location>
        <position position="769"/>
    </location>
</feature>
<feature type="strand" evidence="55">
    <location>
        <begin position="256"/>
        <end position="259"/>
    </location>
</feature>
<feature type="helix" evidence="55">
    <location>
        <begin position="261"/>
        <end position="265"/>
    </location>
</feature>
<feature type="turn" evidence="55">
    <location>
        <begin position="266"/>
        <end position="271"/>
    </location>
</feature>
<feature type="strand" evidence="55">
    <location>
        <begin position="272"/>
        <end position="274"/>
    </location>
</feature>
<feature type="helix" evidence="55">
    <location>
        <begin position="275"/>
        <end position="280"/>
    </location>
</feature>
<feature type="helix" evidence="62">
    <location>
        <begin position="328"/>
        <end position="336"/>
    </location>
</feature>
<feature type="strand" evidence="56">
    <location>
        <begin position="383"/>
        <end position="386"/>
    </location>
</feature>
<feature type="helix" evidence="57">
    <location>
        <begin position="389"/>
        <end position="397"/>
    </location>
</feature>
<feature type="helix" evidence="57">
    <location>
        <begin position="398"/>
        <end position="400"/>
    </location>
</feature>
<feature type="helix" evidence="57">
    <location>
        <begin position="408"/>
        <end position="414"/>
    </location>
</feature>
<feature type="helix" evidence="57">
    <location>
        <begin position="419"/>
        <end position="430"/>
    </location>
</feature>
<feature type="helix" evidence="57">
    <location>
        <begin position="433"/>
        <end position="436"/>
    </location>
</feature>
<feature type="helix" evidence="57">
    <location>
        <begin position="441"/>
        <end position="453"/>
    </location>
</feature>
<feature type="strand" evidence="57">
    <location>
        <begin position="460"/>
        <end position="463"/>
    </location>
</feature>
<feature type="helix" evidence="57">
    <location>
        <begin position="464"/>
        <end position="478"/>
    </location>
</feature>
<feature type="helix" evidence="57">
    <location>
        <begin position="481"/>
        <end position="483"/>
    </location>
</feature>
<feature type="turn" evidence="57">
    <location>
        <begin position="484"/>
        <end position="486"/>
    </location>
</feature>
<feature type="helix" evidence="57">
    <location>
        <begin position="489"/>
        <end position="501"/>
    </location>
</feature>
<feature type="turn" evidence="57">
    <location>
        <begin position="502"/>
        <end position="505"/>
    </location>
</feature>
<feature type="helix" evidence="57">
    <location>
        <begin position="511"/>
        <end position="516"/>
    </location>
</feature>
<feature type="helix" evidence="57">
    <location>
        <begin position="520"/>
        <end position="525"/>
    </location>
</feature>
<feature type="helix" evidence="57">
    <location>
        <begin position="530"/>
        <end position="541"/>
    </location>
</feature>
<feature type="helix" evidence="57">
    <location>
        <begin position="542"/>
        <end position="544"/>
    </location>
</feature>
<feature type="turn" evidence="60">
    <location>
        <begin position="545"/>
        <end position="547"/>
    </location>
</feature>
<feature type="turn" evidence="57">
    <location>
        <begin position="550"/>
        <end position="553"/>
    </location>
</feature>
<feature type="helix" evidence="57">
    <location>
        <begin position="556"/>
        <end position="571"/>
    </location>
</feature>
<feature type="helix" evidence="57">
    <location>
        <begin position="575"/>
        <end position="577"/>
    </location>
</feature>
<feature type="helix" evidence="57">
    <location>
        <begin position="578"/>
        <end position="590"/>
    </location>
</feature>
<feature type="helix" evidence="63">
    <location>
        <begin position="595"/>
        <end position="597"/>
    </location>
</feature>
<feature type="strand" evidence="64">
    <location>
        <begin position="598"/>
        <end position="600"/>
    </location>
</feature>
<feature type="helix" evidence="57">
    <location>
        <begin position="605"/>
        <end position="620"/>
    </location>
</feature>
<feature type="helix" evidence="57">
    <location>
        <begin position="623"/>
        <end position="625"/>
    </location>
</feature>
<feature type="helix" evidence="57">
    <location>
        <begin position="628"/>
        <end position="652"/>
    </location>
</feature>
<feature type="turn" evidence="59">
    <location>
        <begin position="658"/>
        <end position="660"/>
    </location>
</feature>
<feature type="turn" evidence="64">
    <location>
        <begin position="662"/>
        <end position="664"/>
    </location>
</feature>
<feature type="helix" evidence="57">
    <location>
        <begin position="667"/>
        <end position="677"/>
    </location>
</feature>
<feature type="helix" evidence="57">
    <location>
        <begin position="679"/>
        <end position="689"/>
    </location>
</feature>
<feature type="turn" evidence="57">
    <location>
        <begin position="690"/>
        <end position="694"/>
    </location>
</feature>
<feature type="helix" evidence="57">
    <location>
        <begin position="695"/>
        <end position="710"/>
    </location>
</feature>
<feature type="helix" evidence="61">
    <location>
        <begin position="730"/>
        <end position="734"/>
    </location>
</feature>
<feature type="turn" evidence="58">
    <location>
        <begin position="735"/>
        <end position="738"/>
    </location>
</feature>
<feature type="modified residue" description="Phosphoserine" evidence="14">
    <location sequence="Q08499-2">
        <position position="54"/>
    </location>
</feature>
<feature type="modified residue" description="Phosphoserine" evidence="52">
    <location sequence="Q08499-6">
        <position position="59"/>
    </location>
</feature>
<feature type="modified residue" description="Phosphoserine" evidence="52">
    <location sequence="Q08499-6">
        <position position="63"/>
    </location>
</feature>
<feature type="modified residue" description="Phosphoserine" evidence="52">
    <location sequence="Q08499-7">
        <position position="59"/>
    </location>
</feature>
<feature type="modified residue" description="Phosphoserine" evidence="52">
    <location sequence="Q08499-7">
        <position position="63"/>
    </location>
</feature>
<feature type="modified residue" description="Phosphoserine" evidence="52">
    <location sequence="Q08499-12">
        <position position="59"/>
    </location>
</feature>
<feature type="modified residue" description="Phosphoserine" evidence="52">
    <location sequence="Q08499-12">
        <position position="63"/>
    </location>
</feature>
<proteinExistence type="evidence at protein level"/>
<protein>
    <recommendedName>
        <fullName evidence="41">3',5'-cyclic-AMP phosphodiesterase 4D</fullName>
        <ecNumber evidence="30">3.1.4.53</ecNumber>
    </recommendedName>
    <alternativeName>
        <fullName>DPDE3</fullName>
    </alternativeName>
    <alternativeName>
        <fullName>PDE43</fullName>
    </alternativeName>
    <alternativeName>
        <fullName evidence="41">cAMP-specific phosphodiesterase 4D</fullName>
    </alternativeName>
</protein>
<reference key="1">
    <citation type="journal article" date="1993" name="Mol. Cell. Biol.">
        <title>A family of human phosphodiesterases homologous to the dunce learning and memory gene product of Drosophila melanogaster are potential targets for antidepressant drugs.</title>
        <authorList>
            <person name="Bolger G."/>
            <person name="Michaeli T."/>
            <person name="Martins T."/>
            <person name="St John T."/>
            <person name="Steiner B."/>
            <person name="Rodgers L."/>
            <person name="Riggs M."/>
            <person name="Wigler M."/>
            <person name="Ferguson K."/>
        </authorList>
    </citation>
    <scope>NUCLEOTIDE SEQUENCE [MRNA] (ISOFORMS 3 AND 4)</scope>
</reference>
<reference key="2">
    <citation type="journal article" date="1996" name="FEBS Lett.">
        <title>Identification of cyclic AMP-phosphodiesterase variants from the PDE4D gene expressed in human peripheral mononuclear cells.</title>
        <authorList>
            <person name="Nemoz G."/>
            <person name="Zhang R.B."/>
            <person name="Sette C."/>
            <person name="Conti M."/>
        </authorList>
    </citation>
    <scope>NUCLEOTIDE SEQUENCE [MRNA] (ISOFORMS 1; 2 AND 4)</scope>
</reference>
<reference key="3">
    <citation type="journal article" date="1994" name="Gene">
        <title>Isolation of a cDNA encoding a human rolipram-sensitive cyclic AMP phosphodiesterase (PDE IVD).</title>
        <authorList>
            <person name="Baecker P.A."/>
            <person name="Obernolte R."/>
            <person name="Bach C."/>
            <person name="Yee C."/>
            <person name="Shelton E.R."/>
        </authorList>
    </citation>
    <scope>NUCLEOTIDE SEQUENCE [MRNA] (ISOFORM 10)</scope>
    <source>
        <tissue>Heart</tissue>
    </source>
</reference>
<reference key="4">
    <citation type="journal article" date="1997" name="Biochem. J.">
        <title>Characterization of five different proteins produced by alternatively spliced mRNAs from the human cAMP-specific phosphodiesterase PDE4D gene.</title>
        <authorList>
            <person name="Bolger G.B."/>
            <person name="Erdogan S."/>
            <person name="Jones R.E."/>
            <person name="Loughney K."/>
            <person name="Scotland G."/>
            <person name="Hoffmann R."/>
            <person name="Wilkinson I."/>
            <person name="Farrell C."/>
            <person name="Houslay M.D."/>
        </authorList>
    </citation>
    <scope>NUCLEOTIDE SEQUENCE [MRNA] (ISOFORMS 1; 2; 3; 4; 5 AND 10)</scope>
    <scope>SEQUENCE REVISION (ISOFORM 1)</scope>
    <scope>FUNCTION</scope>
    <scope>CATALYTIC ACTIVITY</scope>
</reference>
<reference key="5">
    <citation type="journal article" date="2000" name="Biochem. Biophys. Res. Commun.">
        <title>Phosphodiesterases 4D and 7A splice variants in the response of HUVEC cells to TNF-alpha1.</title>
        <authorList>
            <person name="Miro X."/>
            <person name="Casacuberta J.M."/>
            <person name="Gutierrez-Lopez M.D."/>
            <person name="Landazuri M.O."/>
            <person name="Puigdomenech P."/>
        </authorList>
    </citation>
    <scope>NUCLEOTIDE SEQUENCE [MRNA] (ISOFORM N3)</scope>
    <scope>ALTERNATIVE SPLICING</scope>
    <source>
        <tissue>Umbilical vein endothelial cell</tissue>
    </source>
</reference>
<reference key="6">
    <citation type="journal article" date="2003" name="Cell. Signal.">
        <title>Cloning and characterization of novel PDE4D isoforms PDE4D6 and PDE4D7.</title>
        <authorList>
            <person name="Wang D."/>
            <person name="Deng C."/>
            <person name="Bugaj-Gaweda B."/>
            <person name="Kwan M."/>
            <person name="Gunwaldsen C."/>
            <person name="Leonard C."/>
            <person name="Xin X."/>
            <person name="Hu Y."/>
            <person name="Unterbeck A."/>
            <person name="De Vivo M."/>
        </authorList>
    </citation>
    <scope>NUCLEOTIDE SEQUENCE [MRNA] (ISOFORMS 6; 7; 8 AND 9)</scope>
    <scope>PHOSPHORYLATION</scope>
    <scope>TISSUE SPECIFICITY</scope>
</reference>
<reference key="7">
    <citation type="journal article" date="2003" name="Nat. Genet.">
        <title>The gene encoding phosphodiesterase 4D confers risk of ischemic stroke.</title>
        <authorList>
            <person name="Gretarsdottir S."/>
            <person name="Thorleifsson G."/>
            <person name="Reynisdottir S.T."/>
            <person name="Manolescu A."/>
            <person name="Jonsdottir S."/>
            <person name="Jonsdottir T."/>
            <person name="Gudmundsdottir T."/>
            <person name="Bjarnadottir S.M."/>
            <person name="Einarsson O.B."/>
            <person name="Gudjonsdottir H.M."/>
            <person name="Hawkins M."/>
            <person name="Gudmundsson G."/>
            <person name="Gudmundsdottir H."/>
            <person name="Andrason H."/>
            <person name="Gudmundsdottir A.S."/>
            <person name="Sigurdardottir M."/>
            <person name="Chou T.T."/>
            <person name="Nahmias J."/>
            <person name="Goss S."/>
            <person name="Sveinbjoernsdottir S."/>
            <person name="Valdimarsson E.M."/>
            <person name="Jakobsson F."/>
            <person name="Agnarsson U."/>
            <person name="Gudnason V."/>
            <person name="Thorgeirsson G."/>
            <person name="Fingerle J."/>
            <person name="Gurney M."/>
            <person name="Gudbjartsson D."/>
            <person name="Frigge M.L."/>
            <person name="Kong A."/>
            <person name="Stefansson K."/>
            <person name="Gulcher J.R."/>
        </authorList>
    </citation>
    <scope>NUCLEOTIDE SEQUENCE [MRNA] (ISOFORMS 7 AND 9)</scope>
    <scope>INVOLVEMENT IN SUSCEPTIBILITY TO STROKE</scope>
</reference>
<reference key="8">
    <citation type="journal article" date="2005" name="Nat. Genet.">
        <authorList>
            <person name="Gretarsdottir S."/>
            <person name="Thorleifsson G."/>
            <person name="Reynisdottir S.T."/>
            <person name="Manolescu A."/>
            <person name="Jonsdottir S."/>
            <person name="Jonsdottir T."/>
            <person name="Gudmundsdottir T."/>
            <person name="Bjarnadottir S.M."/>
            <person name="Einarsson O.B."/>
            <person name="Gudjonsdottir H.M."/>
            <person name="Hawkins M."/>
            <person name="Gudmundsson G."/>
            <person name="Gudmundsdottir H."/>
            <person name="Andrason H."/>
            <person name="Gudmundsdottir A.S."/>
            <person name="Sigurdardottir M."/>
            <person name="Chou T.T."/>
            <person name="Nahmias J."/>
            <person name="Goss S."/>
            <person name="Sveinbjoernsdottir S."/>
            <person name="Valdimarsson E.M."/>
            <person name="Jakobsson F."/>
            <person name="Agnarsson U."/>
            <person name="Gudnason V."/>
            <person name="Thorgeirsson G."/>
            <person name="Fingerle J."/>
            <person name="Gurney M."/>
            <person name="Gudbjartsson D."/>
            <person name="Frigge M.L."/>
            <person name="Kong A."/>
            <person name="Stefansson K."/>
            <person name="Gulcher J.R."/>
        </authorList>
    </citation>
    <scope>ERRATUM OF PUBMED:14517540</scope>
</reference>
<reference key="9">
    <citation type="submission" date="2003-05" db="EMBL/GenBank/DDBJ databases">
        <title>Cloning of human full-length CDSs in BD Creator(TM) system donor vector.</title>
        <authorList>
            <person name="Kalnine N."/>
            <person name="Chen X."/>
            <person name="Rolfs A."/>
            <person name="Halleck A."/>
            <person name="Hines L."/>
            <person name="Eisenstein S."/>
            <person name="Koundinya M."/>
            <person name="Raphael J."/>
            <person name="Moreira D."/>
            <person name="Kelley T."/>
            <person name="LaBaer J."/>
            <person name="Lin Y."/>
            <person name="Phelan M."/>
            <person name="Farmer A."/>
        </authorList>
    </citation>
    <scope>NUCLEOTIDE SEQUENCE [LARGE SCALE MRNA] (ISOFORM 12)</scope>
</reference>
<reference key="10">
    <citation type="journal article" date="2004" name="Genome Res.">
        <title>The status, quality, and expansion of the NIH full-length cDNA project: the Mammalian Gene Collection (MGC).</title>
        <authorList>
            <consortium name="The MGC Project Team"/>
        </authorList>
    </citation>
    <scope>NUCLEOTIDE SEQUENCE [LARGE SCALE MRNA] (ISOFORMS 6 AND 12)</scope>
    <source>
        <tissue>Brain</tissue>
        <tissue>Testis</tissue>
    </source>
</reference>
<reference key="11">
    <citation type="journal article" date="2002" name="BMC Biochem.">
        <title>Delineation of RAID1, the RACK1 interaction domain located within the unique N-terminal region of the cAMP-specific phosphodiesterase, PDE4D5.</title>
        <authorList>
            <person name="Bolger G.B."/>
            <person name="McCahill A."/>
            <person name="Yarwood S.J."/>
            <person name="Steele M.S."/>
            <person name="Warwicker J."/>
            <person name="Houslay M.D."/>
        </authorList>
    </citation>
    <scope>INTERACTION WITH RACK1</scope>
</reference>
<reference key="12">
    <citation type="journal article" date="2003" name="J. Biol. Chem.">
        <title>The unique amino-terminal region of the PDE4D5 cAMP phosphodiesterase isoform confers preferential interaction with beta-arrestins.</title>
        <authorList>
            <person name="Bolger G.B."/>
            <person name="McCahill A."/>
            <person name="Huston E."/>
            <person name="Cheung Y.F."/>
            <person name="McSorley T."/>
            <person name="Baillie G.S."/>
            <person name="Houslay M.D."/>
        </authorList>
    </citation>
    <scope>INTERACTION WITH ARRB2</scope>
    <scope>SUBCELLULAR LOCATION</scope>
</reference>
<reference key="13">
    <citation type="journal article" date="2004" name="J. Biol. Chem.">
        <title>The oligomerization state determines regulatory properties and inhibitor sensitivity of type 4 cAMP-specific phosphodiesterases.</title>
        <authorList>
            <person name="Richter W."/>
            <person name="Conti M."/>
        </authorList>
    </citation>
    <scope>HOMODIMERIZATION OF LONG ISOFORMS</scope>
    <scope>ACTIVITY REGULATION BY ROLIPRAM AND PHOSPHATIDIC ACID</scope>
    <scope>PHOSPHORYLATION AT SER-54 (ISOFORM 3)</scope>
</reference>
<reference key="14">
    <citation type="journal article" date="2006" name="Cell">
        <title>Global, in vivo, and site-specific phosphorylation dynamics in signaling networks.</title>
        <authorList>
            <person name="Olsen J.V."/>
            <person name="Blagoev B."/>
            <person name="Gnad F."/>
            <person name="Macek B."/>
            <person name="Kumar C."/>
            <person name="Mortensen P."/>
            <person name="Mann M."/>
        </authorList>
    </citation>
    <scope>IDENTIFICATION BY MASS SPECTROMETRY [LARGE SCALE ANALYSIS]</scope>
    <source>
        <tissue>Cervix carcinoma</tissue>
    </source>
</reference>
<reference key="15">
    <citation type="journal article" date="2006" name="Nat. Genet.">
        <title>Many hypotheses but no replication for the association between PDE4D and stroke.</title>
        <authorList>
            <person name="Rosand J."/>
            <person name="Bayley N."/>
            <person name="Rost N."/>
            <person name="de Bakker P.I.W."/>
        </authorList>
    </citation>
    <scope>DISCUSSION OF INVOLVEMENT IN STROKE</scope>
</reference>
<reference key="16">
    <citation type="journal article" date="2007" name="J. Biol. Chem.">
        <title>Dynamic regulation of cystic fibrosis transmembrane conductance regulator by competitive interactions of molecular adaptors.</title>
        <authorList>
            <person name="Lee J.H."/>
            <person name="Richter W."/>
            <person name="Namkung W."/>
            <person name="Kim K.H."/>
            <person name="Kim E."/>
            <person name="Conti M."/>
            <person name="Lee M.G."/>
        </authorList>
    </citation>
    <scope>INTERACTION WITH SHANK2</scope>
    <scope>TISSUE SPECIFICITY</scope>
</reference>
<reference key="17">
    <citation type="journal article" date="2007" name="J. Pharmacol. Exp. Ther.">
        <title>PDE4B5, a novel, super-short, brain-specific cAMP phosphodiesterase-4 variant whose isoform-specifying N-terminal region is identical to that of cAMP phosphodiesterase-4D6 (PDE4D6).</title>
        <authorList>
            <person name="Cheung Y.F."/>
            <person name="Kan Z."/>
            <person name="Garrett-Engele P."/>
            <person name="Gall I."/>
            <person name="Murdoch H."/>
            <person name="Baillie G.S."/>
            <person name="Camargo L.M."/>
            <person name="Johnson J.M."/>
            <person name="Houslay M.D."/>
            <person name="Castle J.C."/>
        </authorList>
    </citation>
    <scope>TISSUE SPECIFICITY (ISOFORM 6)</scope>
</reference>
<reference key="18">
    <citation type="journal article" date="2008" name="J. Proteome Res.">
        <title>Phosphoproteome of resting human platelets.</title>
        <authorList>
            <person name="Zahedi R.P."/>
            <person name="Lewandrowski U."/>
            <person name="Wiesner J."/>
            <person name="Wortelkamp S."/>
            <person name="Moebius J."/>
            <person name="Schuetz C."/>
            <person name="Walter U."/>
            <person name="Gambaryan S."/>
            <person name="Sickmann A."/>
        </authorList>
    </citation>
    <scope>IDENTIFICATION BY MASS SPECTROMETRY [LARGE SCALE ANALYSIS]</scope>
    <source>
        <tissue>Platelet</tissue>
    </source>
</reference>
<reference key="19">
    <citation type="journal article" date="2008" name="Proc. Natl. Acad. Sci. U.S.A.">
        <title>A quantitative atlas of mitotic phosphorylation.</title>
        <authorList>
            <person name="Dephoure N."/>
            <person name="Zhou C."/>
            <person name="Villen J."/>
            <person name="Beausoleil S.A."/>
            <person name="Bakalarski C.E."/>
            <person name="Elledge S.J."/>
            <person name="Gygi S.P."/>
        </authorList>
    </citation>
    <scope>PHOSPHORYLATION [LARGE SCALE ANALYSIS] AT SER-59 AND SER-63 (ISOFORMS 12; 5 AND N3)</scope>
    <scope>IDENTIFICATION BY MASS SPECTROMETRY [LARGE SCALE ANALYSIS]</scope>
    <source>
        <tissue>Cervix carcinoma</tissue>
    </source>
</reference>
<reference key="20">
    <citation type="journal article" date="2010" name="Biochem. J.">
        <title>Selective SUMO modification of cAMP-specific phosphodiesterase-4D5 (PDE4D5) regulates the functional consequences of phosphorylation by PKA and ERK.</title>
        <authorList>
            <person name="Li X."/>
            <person name="Vadrevu S."/>
            <person name="Dunlop A."/>
            <person name="Day J."/>
            <person name="Advant N."/>
            <person name="Troeger J."/>
            <person name="Klussmann E."/>
            <person name="Jaffrey E."/>
            <person name="Hay R.T."/>
            <person name="Adams D.R."/>
            <person name="Houslay M.D."/>
            <person name="Baillie G.S."/>
        </authorList>
    </citation>
    <scope>SUMOYLATION AT LYS-387 BY PIAS4</scope>
</reference>
<reference key="21">
    <citation type="journal article" date="2010" name="Sci. Signal.">
        <title>Quantitative phosphoproteomics reveals widespread full phosphorylation site occupancy during mitosis.</title>
        <authorList>
            <person name="Olsen J.V."/>
            <person name="Vermeulen M."/>
            <person name="Santamaria A."/>
            <person name="Kumar C."/>
            <person name="Miller M.L."/>
            <person name="Jensen L.J."/>
            <person name="Gnad F."/>
            <person name="Cox J."/>
            <person name="Jensen T.S."/>
            <person name="Nigg E.A."/>
            <person name="Brunak S."/>
            <person name="Mann M."/>
        </authorList>
    </citation>
    <scope>IDENTIFICATION BY MASS SPECTROMETRY [LARGE SCALE ANALYSIS]</scope>
    <source>
        <tissue>Cervix carcinoma</tissue>
    </source>
</reference>
<reference key="22">
    <citation type="journal article" date="2011" name="Sci. Signal.">
        <title>System-wide temporal characterization of the proteome and phosphoproteome of human embryonic stem cell differentiation.</title>
        <authorList>
            <person name="Rigbolt K.T."/>
            <person name="Prokhorova T.A."/>
            <person name="Akimov V."/>
            <person name="Henningsen J."/>
            <person name="Johansen P.T."/>
            <person name="Kratchmarova I."/>
            <person name="Kassem M."/>
            <person name="Mann M."/>
            <person name="Olsen J.V."/>
            <person name="Blagoev B."/>
        </authorList>
    </citation>
    <scope>PHOSPHORYLATION [LARGE SCALE ANALYSIS] AT SER-299 AND SER-301</scope>
    <scope>IDENTIFICATION BY MASS SPECTROMETRY [LARGE SCALE ANALYSIS]</scope>
</reference>
<reference key="23">
    <citation type="journal article" date="2013" name="J. Proteome Res.">
        <title>Toward a comprehensive characterization of a human cancer cell phosphoproteome.</title>
        <authorList>
            <person name="Zhou H."/>
            <person name="Di Palma S."/>
            <person name="Preisinger C."/>
            <person name="Peng M."/>
            <person name="Polat A.N."/>
            <person name="Heck A.J."/>
            <person name="Mohammed S."/>
        </authorList>
    </citation>
    <scope>PHOSPHORYLATION [LARGE SCALE ANALYSIS] AT SER-348 AND SER-375</scope>
    <scope>IDENTIFICATION BY MASS SPECTROMETRY [LARGE SCALE ANALYSIS]</scope>
    <source>
        <tissue>Cervix carcinoma</tissue>
    </source>
</reference>
<reference key="24">
    <citation type="journal article" date="2002" name="FEBS Lett.">
        <title>Crystal structure of phosphodiesterase 4D and inhibitor complex.</title>
        <authorList>
            <person name="Lee M.E."/>
            <person name="Markowitz J."/>
            <person name="Lee J.-O."/>
            <person name="Lee H."/>
        </authorList>
    </citation>
    <scope>X-RAY CRYSTALLOGRAPHY (2.9 ANGSTROMS) OF 388-715 IN COMPLEX WITH THE INHIBITOR ZARDAVERINE AND DIVALENT METAL IONS</scope>
    <scope>MUTAGENESIS OF ASP-527 AND ARG-563</scope>
</reference>
<reference evidence="44" key="25">
    <citation type="journal article" date="2003" name="Biochemistry">
        <title>The crystal structure of AMP-bound PDE4 suggests a mechanism for phosphodiesterase catalysis.</title>
        <authorList>
            <person name="Huai Q."/>
            <person name="Colicelli J."/>
            <person name="Ke H."/>
        </authorList>
    </citation>
    <scope>X-RAY CRYSTALLOGRAPHY (2.4 ANGSTROMS) OF 381-739 IN COMPLEX WITH AMP AND ZINC</scope>
    <scope>COFACTOR</scope>
</reference>
<reference key="26">
    <citation type="journal article" date="2003" name="Structure">
        <title>Three-dimensional structures of PDE4D in complex with roliprams and implication on inhibitor selectivity.</title>
        <authorList>
            <person name="Huai Q."/>
            <person name="Wang H."/>
            <person name="Sun Y."/>
            <person name="Kim H.Y."/>
            <person name="Liu Y."/>
            <person name="Ke H."/>
        </authorList>
    </citation>
    <scope>X-RAY CRYSTALLOGRAPHY (2.0 ANGSTROMS) OF 381-739 IN COMPLEX WITH INHIBITOR</scope>
</reference>
<reference key="27">
    <citation type="journal article" date="2004" name="J. Biol. Chem.">
        <title>Crystal structures of phosphodiesterases 4 and 5 in complex with inhibitor 3-isobutyl-1-methylxanthine suggest a conformation determinant of inhibitor selectivity.</title>
        <authorList>
            <person name="Huai Q."/>
            <person name="Liu Y."/>
            <person name="Francis S.H."/>
            <person name="Corbin J.D."/>
            <person name="Ke H."/>
        </authorList>
    </citation>
    <scope>X-RAY CRYSTALLOGRAPHY (2.1 ANGSTROMS) OF 381-714 IN COMPLEX WITH METAL IONS AND INHIBITOR</scope>
</reference>
<reference key="28">
    <citation type="journal article" date="2004" name="J. Mol. Biol.">
        <title>Crystal structures of the catalytic domain of phosphodiesterase 4B complexed with AMP, 8-Br-AMP, and rolipram.</title>
        <authorList>
            <person name="Xu R.X."/>
            <person name="Rocque W.J."/>
            <person name="Lambert M.H."/>
            <person name="Vanderwall D.E."/>
            <person name="Luther M.A."/>
            <person name="Nolte R.T."/>
        </authorList>
    </citation>
    <scope>X-RAY CRYSTALLOGRAPHY (2.0 ANGSTROMS) OF 380-756 IN COMPLEX WITH AMP; METAL IONS AND THE INHIBITOR ROLIPRAM</scope>
</reference>
<reference evidence="45 46" key="29">
    <citation type="journal article" date="2004" name="Mol. Cell">
        <title>A glutamine switch mechanism for nucleotide selectivity by phosphodiesterases.</title>
        <authorList>
            <person name="Zhang K.Y.J."/>
            <person name="Card G.L."/>
            <person name="Suzuki Y."/>
            <person name="Artis D.R."/>
            <person name="Fong D."/>
            <person name="Gillette S."/>
            <person name="Hsieh D."/>
            <person name="Neiman J."/>
            <person name="West B.L."/>
            <person name="Zhang C."/>
            <person name="Milburn M.V."/>
            <person name="Kim S.-H."/>
            <person name="Schlessinger J."/>
            <person name="Bollag G."/>
        </authorList>
    </citation>
    <scope>X-RAY CRYSTALLOGRAPHY (1.60 ANGSTROMS) OF 388-715 IN COMPLEX WITH AMP; ZINC; MAGNESIUM AND THE INHIBITOR ROLIPRAM</scope>
    <scope>FUNCTION</scope>
    <scope>COFACTOR</scope>
</reference>
<reference evidence="47 48 49 50" key="30">
    <citation type="journal article" date="2004" name="Structure">
        <title>Structural basis for the activity of drugs that inhibit phosphodiesterases.</title>
        <authorList>
            <person name="Card G.L."/>
            <person name="England B.P."/>
            <person name="Suzuki Y."/>
            <person name="Fong D."/>
            <person name="Powell B."/>
            <person name="Lee B."/>
            <person name="Luu C."/>
            <person name="Tabrizizad M."/>
            <person name="Gillette S."/>
            <person name="Ibrahim P.N."/>
            <person name="Artis D.R."/>
            <person name="Bollag G."/>
            <person name="Milburn M.V."/>
            <person name="Kim S.-H."/>
            <person name="Schlessinger J."/>
            <person name="Zhang K.Y.J."/>
        </authorList>
    </citation>
    <scope>X-RAY CRYSTALLOGRAPHY (1.54 ANGSTROMS) OF 388-715 IN COMPLEX WITH ZINC; MAGNESIUM AND INHIBITORS</scope>
    <scope>FUNCTION</scope>
    <scope>COFACTOR</scope>
</reference>
<reference key="31">
    <citation type="journal article" date="2005" name="Nat. Biotechnol.">
        <title>A family of phosphodiesterase inhibitors discovered by cocrystallography and scaffold-based drug design.</title>
        <authorList>
            <person name="Card G.L."/>
            <person name="Blasdel L."/>
            <person name="England B.P."/>
            <person name="Zhang C."/>
            <person name="Suzuki Y."/>
            <person name="Gillette S."/>
            <person name="Fong D."/>
            <person name="Ibrahim P.N."/>
            <person name="Artis D.R."/>
            <person name="Bollag G."/>
            <person name="Milburn M.V."/>
            <person name="Kim S.-H."/>
            <person name="Schlessinger J."/>
            <person name="Zhang K.Y.J."/>
        </authorList>
    </citation>
    <scope>X-RAY CRYSTALLOGRAPHY (1.36 ANGSTROMS) OF 388-715 IN COMPLEX WITH METAL IONS AND INHIBITORS</scope>
</reference>
<reference key="32">
    <citation type="journal article" date="2006" name="J. Med. Chem.">
        <title>Enantiomer discrimination illustrated by the high resolution crystal structures of type 4 phosphodiesterase.</title>
        <authorList>
            <person name="Huai Q."/>
            <person name="Sun Y."/>
            <person name="Wang H."/>
            <person name="Macdonald D."/>
            <person name="Aspiotis R."/>
            <person name="Robinson H."/>
            <person name="Huang Z."/>
            <person name="Ke H."/>
        </authorList>
    </citation>
    <scope>X-RAY CRYSTALLOGRAPHY (2.00 ANGSTROMS) OF 381-741 IN COMPLEX WITH METAL IONS AND INHIBITORS</scope>
</reference>
<reference key="33">
    <citation type="journal article" date="2007" name="Biochem. J.">
        <title>Structures of the four subfamilies of phosphodiesterase-4 provide insight into the selectivity of their inhibitors.</title>
        <authorList>
            <person name="Wang H."/>
            <person name="Peng M.-S."/>
            <person name="Chen Y."/>
            <person name="Geng J."/>
            <person name="Robinson H."/>
            <person name="Houslay M.D."/>
            <person name="Cai J."/>
            <person name="Ke H."/>
        </authorList>
    </citation>
    <scope>X-RAY CRYSTALLOGRAPHY (1.57 ANGSTROMS) OF 388-715 IN COMPLEX WITH METAL IONS AND THE INHIBITOR NVP</scope>
</reference>
<reference key="34">
    <citation type="journal article" date="2007" name="Cell. Signal.">
        <title>1H NMR structural and functional characterisation of a cAMP-specific phosphodiesterase-4D5 (PDE4D5) N-terminal region peptide that disrupts PDE4D5 interaction with the signalling scaffold proteins, beta-arrestin and RACK1.</title>
        <authorList>
            <person name="Smith K.J."/>
            <person name="Baillie G.S."/>
            <person name="Hyde E.I."/>
            <person name="Li X."/>
            <person name="Houslay T.M."/>
            <person name="McCahill A."/>
            <person name="Dunlop A.J."/>
            <person name="Bolger G.B."/>
            <person name="Klussmann E."/>
            <person name="Adams D.R."/>
            <person name="Houslay M.D."/>
        </authorList>
    </citation>
    <scope>STRUCTURE BY NMR OF N-TERMINUS OF ISOFORM 5/N3/12</scope>
    <scope>INTERACTION WITH RACK1</scope>
</reference>
<reference evidence="51" key="35">
    <citation type="journal article" date="2007" name="J. Mol. Biol.">
        <title>The molecular basis for different recognition of substrates by phosphodiesterase families 4 and 10.</title>
        <authorList>
            <person name="Wang H."/>
            <person name="Robinson H."/>
            <person name="Ke H."/>
        </authorList>
    </citation>
    <scope>X-RAY CRYSTALLOGRAPHY (1.56 ANGSTROMS) OF 388-714 OF MUTANT ASN-503 IN COMPLEX WITH 3',5'-CAMP AND METAL IONS</scope>
    <scope>MUTAGENESIS OF ASP-503</scope>
    <scope>COFACTOR</scope>
</reference>
<reference key="36">
    <citation type="journal article" date="2012" name="Am. J. Hum. Genet.">
        <title>Exome sequencing identifies PDE4D mutations as another cause of acrodysostosis.</title>
        <authorList>
            <person name="Michot C."/>
            <person name="Le Goff C."/>
            <person name="Goldenberg A."/>
            <person name="Abhyankar A."/>
            <person name="Klein C."/>
            <person name="Kinning E."/>
            <person name="Guerrot A.M."/>
            <person name="Flahaut P."/>
            <person name="Duncombe A."/>
            <person name="Baujat G."/>
            <person name="Lyonnet S."/>
            <person name="Thalassinos C."/>
            <person name="Nitschke P."/>
            <person name="Casanova J.L."/>
            <person name="Le Merrer M."/>
            <person name="Munnich A."/>
            <person name="Cormier-Daire V."/>
        </authorList>
    </citation>
    <scope>VARIANTS ACRDYS2 ALA-190; THR-225; SER-226 AND PRO-587</scope>
</reference>
<reference key="37">
    <citation type="journal article" date="2012" name="Am. J. Hum. Genet.">
        <title>Exome sequencing identifies PDE4D mutations in acrodysostosis.</title>
        <authorList>
            <person name="Lee H."/>
            <person name="Graham J.M. Jr."/>
            <person name="Rimoin D.L."/>
            <person name="Lachman R.S."/>
            <person name="Krejci P."/>
            <person name="Tompson S.W."/>
            <person name="Nelson S.F."/>
            <person name="Krakow D."/>
            <person name="Cohn D.H."/>
        </authorList>
    </citation>
    <scope>VARIANTS ACRDYS2 GLU-228; ALA-590 AND ASP-673</scope>
</reference>
<reference key="38">
    <citation type="journal article" date="2012" name="J. Clin. Endocrinol. Metab.">
        <title>PRKAR1A and PDE4D mutations cause acrodysostosis but two distinct syndromes with or without GPCR-signaling hormone resistance.</title>
        <authorList>
            <person name="Linglart A."/>
            <person name="Fryssira H."/>
            <person name="Hiort O."/>
            <person name="Holterhus P.M."/>
            <person name="Perez de Nanclares G."/>
            <person name="Argente J."/>
            <person name="Heinrichs C."/>
            <person name="Kuechler A."/>
            <person name="Mantovani G."/>
            <person name="Leheup B."/>
            <person name="Wicart P."/>
            <person name="Chassot V."/>
            <person name="Schmidt D."/>
            <person name="Rubio-Cabezas O."/>
            <person name="Richter-Unruh A."/>
            <person name="Berrade S."/>
            <person name="Pereda A."/>
            <person name="Boros E."/>
            <person name="Munoz-Calvo M.T."/>
            <person name="Castori M."/>
            <person name="Gunes Y."/>
            <person name="Bertrand G."/>
            <person name="Bougneres P."/>
            <person name="Clauser E."/>
            <person name="Silve C."/>
        </authorList>
    </citation>
    <scope>VARIANTS ACRDYS2 SER-227 AND ALA-590</scope>
</reference>
<reference key="39">
    <citation type="journal article" date="2013" name="Hum. Mutat.">
        <title>Identification of novel mutations confirms Pde4d as a major gene causing acrodysostosis.</title>
        <authorList>
            <consortium name="FORGE Canada Consortium"/>
            <person name="Lynch D.C."/>
            <person name="Dyment D.A."/>
            <person name="Huang L."/>
            <person name="Nikkel S.M."/>
            <person name="Lacombe D."/>
            <person name="Campeau P.M."/>
            <person name="Lee B."/>
            <person name="Bacino C.A."/>
            <person name="Michaud J.L."/>
            <person name="Bernier F.P."/>
            <person name="Parboosingh J.S."/>
            <person name="Innes A.M."/>
        </authorList>
    </citation>
    <scope>VARIANTS ACRDYS2 THR-225; THR-301; VAL-304; ALA-329 AND THR-678</scope>
</reference>
<sequence>MEAEGSSAPARAGSGEGSDSAGGATLKAPKHLWRHEQHHQYPLRQPQFRLLHPHHHLPPPPPPSPQPQPQCPLQPPPPPPLPPPPPPPGAARGRYASSGATGRVRHRGYSDTERYLYCRAMDRTSYAVETGHRPGLKKSRMSWPSSFQGLRRFDVDNGTSAGRSPLDPMTSPGSGLILQANFVHSQRRESFLYRSDSDYDLSPKSMSRNSSIASDIHGDDLIVTPFAQVLASLRTVRNNFAALTNLQDRAPSKRSPMCNQPSINKATITEEAYQKLASETLEELDWCLDQLETLQTRHSVSEMASNKFKRMLNRELTHLSEMSRSGNQVSEFISNTFLDKQHEVEIPSPTQKEKEKKKRPMSQISGVKKLMHSSSLTNSSIPRFGVKTEQEDVLAKELEDVNKWGLHVFRIAELSGNRPLTVIMHTIFQERDLLKTFKIPVDTLITYLMTLEDHYHADVAYHNNIHAADVVQSTHVLLSTPALEAVFTDLEILAAIFASAIHDVDHPGVSNQFLINTNSELALMYNDSSVLENHHLAVGFKLLQEENCDIFQNLTKKQRQSLRKMVIDIVLATDMSKHMNLLADLKTMVETKKVTSSGVLLLDNYSDRIQVLQNMVHCADLSNPTKPLQLYRQWTDRIMEEFFRQGDRERERGMEISPMCDKHNASVEKSQVGFIDYIVHPLWETWADLVHPDAQDILDTLEDNREWYQSTIPQSPSPAPDDPEEGRQGQTEKFQFELTLEEDGESDTEKDSGSQVEEDTSCSDSKTLCTQDSESTEIPLDEQVEEEAVGEEEESQPEACVIDDRSPDT</sequence>
<keyword id="KW-0002">3D-structure</keyword>
<keyword id="KW-0025">Alternative splicing</keyword>
<keyword id="KW-0114">cAMP</keyword>
<keyword id="KW-1003">Cell membrane</keyword>
<keyword id="KW-0963">Cytoplasm</keyword>
<keyword id="KW-0206">Cytoskeleton</keyword>
<keyword id="KW-0225">Disease variant</keyword>
<keyword id="KW-0378">Hydrolase</keyword>
<keyword id="KW-1017">Isopeptide bond</keyword>
<keyword id="KW-0464">Manganese</keyword>
<keyword id="KW-0472">Membrane</keyword>
<keyword id="KW-0479">Metal-binding</keyword>
<keyword id="KW-0597">Phosphoprotein</keyword>
<keyword id="KW-1267">Proteomics identification</keyword>
<keyword id="KW-1185">Reference proteome</keyword>
<keyword id="KW-0832">Ubl conjugation</keyword>
<keyword id="KW-0862">Zinc</keyword>
<dbReference type="EC" id="3.1.4.53" evidence="30"/>
<dbReference type="EMBL" id="L20970">
    <property type="protein sequence ID" value="AAA03592.1"/>
    <property type="molecule type" value="mRNA"/>
</dbReference>
<dbReference type="EMBL" id="L20969">
    <property type="protein sequence ID" value="AAC00042.1"/>
    <property type="molecule type" value="mRNA"/>
</dbReference>
<dbReference type="EMBL" id="U02882">
    <property type="protein sequence ID" value="AAC13745.1"/>
    <property type="molecule type" value="mRNA"/>
</dbReference>
<dbReference type="EMBL" id="U50157">
    <property type="protein sequence ID" value="AAA97890.1"/>
    <property type="molecule type" value="mRNA"/>
</dbReference>
<dbReference type="EMBL" id="U50158">
    <property type="protein sequence ID" value="AAA97891.1"/>
    <property type="molecule type" value="mRNA"/>
</dbReference>
<dbReference type="EMBL" id="U50159">
    <property type="protein sequence ID" value="AAA97892.1"/>
    <property type="molecule type" value="mRNA"/>
</dbReference>
<dbReference type="EMBL" id="AF012074">
    <property type="protein sequence ID" value="AAC00070.1"/>
    <property type="molecule type" value="mRNA"/>
</dbReference>
<dbReference type="EMBL" id="AF012073">
    <property type="protein sequence ID" value="AAC00069.1"/>
    <property type="molecule type" value="mRNA"/>
</dbReference>
<dbReference type="EMBL" id="AJ250854">
    <property type="protein sequence ID" value="CAC03757.1"/>
    <property type="molecule type" value="mRNA"/>
</dbReference>
<dbReference type="EMBL" id="AF536975">
    <property type="protein sequence ID" value="AAN10117.1"/>
    <property type="molecule type" value="mRNA"/>
</dbReference>
<dbReference type="EMBL" id="AF536976">
    <property type="protein sequence ID" value="AAN10118.1"/>
    <property type="molecule type" value="mRNA"/>
</dbReference>
<dbReference type="EMBL" id="AF536977">
    <property type="protein sequence ID" value="AAN10119.1"/>
    <property type="molecule type" value="mRNA"/>
</dbReference>
<dbReference type="EMBL" id="AY388960">
    <property type="protein sequence ID" value="AAQ90404.1"/>
    <property type="molecule type" value="mRNA"/>
</dbReference>
<dbReference type="EMBL" id="AY245866">
    <property type="protein sequence ID" value="AAP75760.1"/>
    <property type="molecule type" value="mRNA"/>
</dbReference>
<dbReference type="EMBL" id="AY245867">
    <property type="protein sequence ID" value="AAP75761.1"/>
    <property type="molecule type" value="mRNA"/>
</dbReference>
<dbReference type="EMBL" id="BT007398">
    <property type="protein sequence ID" value="AAP36062.1"/>
    <property type="molecule type" value="mRNA"/>
</dbReference>
<dbReference type="EMBL" id="BC008390">
    <property type="protein sequence ID" value="AAH08390.1"/>
    <property type="molecule type" value="mRNA"/>
</dbReference>
<dbReference type="EMBL" id="BC036319">
    <property type="protein sequence ID" value="AAH36319.1"/>
    <property type="molecule type" value="mRNA"/>
</dbReference>
<dbReference type="CCDS" id="CCDS47213.1">
    <molecule id="Q08499-1"/>
</dbReference>
<dbReference type="CCDS" id="CCDS54858.1">
    <molecule id="Q08499-2"/>
</dbReference>
<dbReference type="CCDS" id="CCDS54859.1">
    <molecule id="Q08499-11"/>
</dbReference>
<dbReference type="CCDS" id="CCDS56369.1">
    <molecule id="Q08499-8"/>
</dbReference>
<dbReference type="CCDS" id="CCDS56370.1">
    <molecule id="Q08499-5"/>
</dbReference>
<dbReference type="CCDS" id="CCDS56371.1">
    <molecule id="Q08499-10"/>
</dbReference>
<dbReference type="CCDS" id="CCDS56372.1">
    <molecule id="Q08499-9"/>
</dbReference>
<dbReference type="CCDS" id="CCDS56373.1">
    <molecule id="Q08499-6"/>
</dbReference>
<dbReference type="CCDS" id="CCDS93714.1">
    <molecule id="Q08499-12"/>
</dbReference>
<dbReference type="PIR" id="I61358">
    <property type="entry name" value="I61358"/>
</dbReference>
<dbReference type="RefSeq" id="NP_001098101.1">
    <molecule id="Q08499-1"/>
    <property type="nucleotide sequence ID" value="NM_001104631.2"/>
</dbReference>
<dbReference type="RefSeq" id="NP_001159371.1">
    <molecule id="Q08499-11"/>
    <property type="nucleotide sequence ID" value="NM_001165899.2"/>
</dbReference>
<dbReference type="RefSeq" id="NP_001184147.1">
    <molecule id="Q08499-6"/>
    <property type="nucleotide sequence ID" value="NM_001197218.2"/>
</dbReference>
<dbReference type="RefSeq" id="NP_001184148.1">
    <molecule id="Q08499-9"/>
    <property type="nucleotide sequence ID" value="NM_001197219.2"/>
</dbReference>
<dbReference type="RefSeq" id="NP_001184149.1">
    <molecule id="Q08499-10"/>
    <property type="nucleotide sequence ID" value="NM_001197220.2"/>
</dbReference>
<dbReference type="RefSeq" id="NP_001184150.1">
    <molecule id="Q08499-5"/>
    <property type="nucleotide sequence ID" value="NM_001197221.2"/>
</dbReference>
<dbReference type="RefSeq" id="NP_001184151.1">
    <property type="nucleotide sequence ID" value="NM_001197222.1"/>
</dbReference>
<dbReference type="RefSeq" id="NP_001184152.1">
    <molecule id="Q08499-8"/>
    <property type="nucleotide sequence ID" value="NM_001197223.2"/>
</dbReference>
<dbReference type="RefSeq" id="NP_001351528.1">
    <molecule id="Q08499-11"/>
    <property type="nucleotide sequence ID" value="NM_001364599.1"/>
</dbReference>
<dbReference type="RefSeq" id="NP_001351531.1">
    <molecule id="Q08499-12"/>
    <property type="nucleotide sequence ID" value="NM_001364602.2"/>
</dbReference>
<dbReference type="RefSeq" id="NP_001351532.1">
    <molecule id="Q08499-5"/>
    <property type="nucleotide sequence ID" value="NM_001364603.1"/>
</dbReference>
<dbReference type="RefSeq" id="NP_006194.2">
    <molecule id="Q08499-2"/>
    <property type="nucleotide sequence ID" value="NM_006203.4"/>
</dbReference>
<dbReference type="RefSeq" id="XP_005248595.1">
    <property type="nucleotide sequence ID" value="XM_005248538.4"/>
</dbReference>
<dbReference type="RefSeq" id="XP_011541773.1">
    <property type="nucleotide sequence ID" value="XM_011543471.1"/>
</dbReference>
<dbReference type="RefSeq" id="XP_011541775.1">
    <molecule id="Q08499-11"/>
    <property type="nucleotide sequence ID" value="XM_011543473.2"/>
</dbReference>
<dbReference type="RefSeq" id="XP_016865055.1">
    <molecule id="Q08499-11"/>
    <property type="nucleotide sequence ID" value="XM_017009566.1"/>
</dbReference>
<dbReference type="RefSeq" id="XP_024301880.1">
    <molecule id="Q08499-11"/>
    <property type="nucleotide sequence ID" value="XM_024446112.2"/>
</dbReference>
<dbReference type="RefSeq" id="XP_047273249.1">
    <molecule id="Q08499-11"/>
    <property type="nucleotide sequence ID" value="XM_047417293.1"/>
</dbReference>
<dbReference type="RefSeq" id="XP_047273250.1">
    <molecule id="Q08499-11"/>
    <property type="nucleotide sequence ID" value="XM_047417294.1"/>
</dbReference>
<dbReference type="RefSeq" id="XP_047273252.1">
    <molecule id="Q08499-2"/>
    <property type="nucleotide sequence ID" value="XM_047417296.1"/>
</dbReference>
<dbReference type="RefSeq" id="XP_054208759.1">
    <molecule id="Q08499-11"/>
    <property type="nucleotide sequence ID" value="XM_054352784.1"/>
</dbReference>
<dbReference type="RefSeq" id="XP_054208760.1">
    <molecule id="Q08499-11"/>
    <property type="nucleotide sequence ID" value="XM_054352785.1"/>
</dbReference>
<dbReference type="RefSeq" id="XP_054208761.1">
    <molecule id="Q08499-11"/>
    <property type="nucleotide sequence ID" value="XM_054352786.1"/>
</dbReference>
<dbReference type="RefSeq" id="XP_054208762.1">
    <molecule id="Q08499-11"/>
    <property type="nucleotide sequence ID" value="XM_054352787.1"/>
</dbReference>
<dbReference type="RefSeq" id="XP_054208763.1">
    <molecule id="Q08499-11"/>
    <property type="nucleotide sequence ID" value="XM_054352788.1"/>
</dbReference>
<dbReference type="RefSeq" id="XP_054208764.1">
    <molecule id="Q08499-11"/>
    <property type="nucleotide sequence ID" value="XM_054352789.1"/>
</dbReference>
<dbReference type="RefSeq" id="XP_054208765.1">
    <molecule id="Q08499-11"/>
    <property type="nucleotide sequence ID" value="XM_054352790.1"/>
</dbReference>
<dbReference type="RefSeq" id="XP_054208766.1">
    <molecule id="Q08499-11"/>
    <property type="nucleotide sequence ID" value="XM_054352791.1"/>
</dbReference>
<dbReference type="RefSeq" id="XP_054208767.1">
    <molecule id="Q08499-11"/>
    <property type="nucleotide sequence ID" value="XM_054352792.1"/>
</dbReference>
<dbReference type="RefSeq" id="XP_054208768.1">
    <molecule id="Q08499-11"/>
    <property type="nucleotide sequence ID" value="XM_054352793.1"/>
</dbReference>
<dbReference type="RefSeq" id="XP_054208771.1">
    <molecule id="Q08499-9"/>
    <property type="nucleotide sequence ID" value="XM_054352796.1"/>
</dbReference>
<dbReference type="RefSeq" id="XP_054208772.1">
    <molecule id="Q08499-2"/>
    <property type="nucleotide sequence ID" value="XM_054352797.1"/>
</dbReference>
<dbReference type="RefSeq" id="XP_054208773.1">
    <molecule id="Q08499-2"/>
    <property type="nucleotide sequence ID" value="XM_054352798.1"/>
</dbReference>
<dbReference type="PDB" id="1E9K">
    <property type="method" value="NMR"/>
    <property type="chains" value="A=-"/>
</dbReference>
<dbReference type="PDB" id="1MKD">
    <property type="method" value="X-ray"/>
    <property type="resolution" value="2.90 A"/>
    <property type="chains" value="A/B/C/D/E/F/G/H/I/J/K/L=388-715"/>
</dbReference>
<dbReference type="PDB" id="1OYN">
    <property type="method" value="X-ray"/>
    <property type="resolution" value="2.00 A"/>
    <property type="chains" value="A/B/C/D=381-740"/>
</dbReference>
<dbReference type="PDB" id="1PTW">
    <property type="method" value="X-ray"/>
    <property type="resolution" value="2.30 A"/>
    <property type="chains" value="A/B/C/D=381-740"/>
</dbReference>
<dbReference type="PDB" id="1Q9M">
    <property type="method" value="X-ray"/>
    <property type="resolution" value="2.30 A"/>
    <property type="chains" value="A/B/C/D=381-740"/>
</dbReference>
<dbReference type="PDB" id="1TB7">
    <property type="method" value="X-ray"/>
    <property type="resolution" value="1.63 A"/>
    <property type="chains" value="A/B=388-715"/>
</dbReference>
<dbReference type="PDB" id="1TBB">
    <property type="method" value="X-ray"/>
    <property type="resolution" value="1.60 A"/>
    <property type="chains" value="A/B=388-715"/>
</dbReference>
<dbReference type="PDB" id="1XOM">
    <property type="method" value="X-ray"/>
    <property type="resolution" value="1.55 A"/>
    <property type="chains" value="A/B=388-715"/>
</dbReference>
<dbReference type="PDB" id="1XON">
    <property type="method" value="X-ray"/>
    <property type="resolution" value="1.72 A"/>
    <property type="chains" value="A/B=388-715"/>
</dbReference>
<dbReference type="PDB" id="1XOQ">
    <property type="method" value="X-ray"/>
    <property type="resolution" value="1.83 A"/>
    <property type="chains" value="A/B=388-715"/>
</dbReference>
<dbReference type="PDB" id="1XOR">
    <property type="method" value="X-ray"/>
    <property type="resolution" value="1.54 A"/>
    <property type="chains" value="A/B=388-715"/>
</dbReference>
<dbReference type="PDB" id="1Y2B">
    <property type="method" value="X-ray"/>
    <property type="resolution" value="1.40 A"/>
    <property type="chains" value="A/B=388-715"/>
</dbReference>
<dbReference type="PDB" id="1Y2C">
    <property type="method" value="X-ray"/>
    <property type="resolution" value="1.67 A"/>
    <property type="chains" value="A/B=388-715"/>
</dbReference>
<dbReference type="PDB" id="1Y2D">
    <property type="method" value="X-ray"/>
    <property type="resolution" value="1.70 A"/>
    <property type="chains" value="A/B=388-715"/>
</dbReference>
<dbReference type="PDB" id="1Y2E">
    <property type="method" value="X-ray"/>
    <property type="resolution" value="2.10 A"/>
    <property type="chains" value="A/B=388-715"/>
</dbReference>
<dbReference type="PDB" id="1Y2K">
    <property type="method" value="X-ray"/>
    <property type="resolution" value="1.36 A"/>
    <property type="chains" value="A/B=388-715"/>
</dbReference>
<dbReference type="PDB" id="1ZKN">
    <property type="method" value="X-ray"/>
    <property type="resolution" value="2.10 A"/>
    <property type="chains" value="A/B/C/D=381-714"/>
</dbReference>
<dbReference type="PDB" id="2FM0">
    <property type="method" value="X-ray"/>
    <property type="resolution" value="2.00 A"/>
    <property type="chains" value="A/B/C/D=381-741"/>
</dbReference>
<dbReference type="PDB" id="2FM5">
    <property type="method" value="X-ray"/>
    <property type="resolution" value="2.03 A"/>
    <property type="chains" value="A/B/C/D=381-741"/>
</dbReference>
<dbReference type="PDB" id="2PW3">
    <property type="method" value="X-ray"/>
    <property type="resolution" value="1.56 A"/>
    <property type="chains" value="A/B=388-714"/>
</dbReference>
<dbReference type="PDB" id="2QYN">
    <property type="method" value="X-ray"/>
    <property type="resolution" value="1.57 A"/>
    <property type="chains" value="A/B=388-715"/>
</dbReference>
<dbReference type="PDB" id="3G4G">
    <property type="method" value="X-ray"/>
    <property type="resolution" value="2.30 A"/>
    <property type="chains" value="A/B/C/D=299-347, A/B/C/D=360-714"/>
</dbReference>
<dbReference type="PDB" id="3G4I">
    <property type="method" value="X-ray"/>
    <property type="resolution" value="1.90 A"/>
    <property type="chains" value="A/B/C/D=380-753"/>
</dbReference>
<dbReference type="PDB" id="3G4K">
    <property type="method" value="X-ray"/>
    <property type="resolution" value="1.95 A"/>
    <property type="chains" value="A/B/C/D=380-753"/>
</dbReference>
<dbReference type="PDB" id="3G4L">
    <property type="method" value="X-ray"/>
    <property type="resolution" value="2.50 A"/>
    <property type="chains" value="A/B/C/D=380-753"/>
</dbReference>
<dbReference type="PDB" id="3G58">
    <property type="method" value="X-ray"/>
    <property type="resolution" value="2.05 A"/>
    <property type="chains" value="A/B/C/D=380-753"/>
</dbReference>
<dbReference type="PDB" id="3IAD">
    <property type="method" value="X-ray"/>
    <property type="resolution" value="2.65 A"/>
    <property type="chains" value="A/B/C/D=326-339, A/B/C/D=380-714"/>
</dbReference>
<dbReference type="PDB" id="3IAK">
    <property type="method" value="X-ray"/>
    <property type="resolution" value="2.80 A"/>
    <property type="chains" value="A=388-715"/>
</dbReference>
<dbReference type="PDB" id="3K4S">
    <property type="method" value="X-ray"/>
    <property type="resolution" value="2.05 A"/>
    <property type="chains" value="A=388-715"/>
</dbReference>
<dbReference type="PDB" id="3SL3">
    <property type="method" value="X-ray"/>
    <property type="resolution" value="2.10 A"/>
    <property type="chains" value="A/B/C/D=381-741"/>
</dbReference>
<dbReference type="PDB" id="3SL4">
    <property type="method" value="X-ray"/>
    <property type="resolution" value="1.90 A"/>
    <property type="chains" value="A/B/C/D=381-741"/>
</dbReference>
<dbReference type="PDB" id="3SL5">
    <property type="method" value="X-ray"/>
    <property type="resolution" value="2.65 A"/>
    <property type="chains" value="A/B/C/D=381-714"/>
</dbReference>
<dbReference type="PDB" id="3SL6">
    <property type="method" value="X-ray"/>
    <property type="resolution" value="2.44 A"/>
    <property type="chains" value="A/B/C/D=381-741"/>
</dbReference>
<dbReference type="PDB" id="3SL8">
    <property type="method" value="X-ray"/>
    <property type="resolution" value="2.60 A"/>
    <property type="chains" value="A/B/C/D=381-741"/>
</dbReference>
<dbReference type="PDB" id="3V9B">
    <property type="method" value="X-ray"/>
    <property type="resolution" value="2.10 A"/>
    <property type="chains" value="A/B/C/D=381-740"/>
</dbReference>
<dbReference type="PDB" id="4OGB">
    <property type="method" value="X-ray"/>
    <property type="resolution" value="2.03 A"/>
    <property type="chains" value="A/B/C/D=381-741"/>
</dbReference>
<dbReference type="PDB" id="4W1O">
    <property type="method" value="X-ray"/>
    <property type="resolution" value="2.20 A"/>
    <property type="chains" value="A/B/C/D=381-739"/>
</dbReference>
<dbReference type="PDB" id="4WCU">
    <property type="method" value="X-ray"/>
    <property type="resolution" value="2.35 A"/>
    <property type="chains" value="A/B/C/D=381-739"/>
</dbReference>
<dbReference type="PDB" id="5K1I">
    <property type="method" value="X-ray"/>
    <property type="resolution" value="2.61 A"/>
    <property type="chains" value="A/B/C/D/E/F/G/H=388-713"/>
</dbReference>
<dbReference type="PDB" id="5K32">
    <property type="method" value="X-ray"/>
    <property type="resolution" value="1.99 A"/>
    <property type="chains" value="A/B=390-713"/>
</dbReference>
<dbReference type="PDB" id="5LBO">
    <property type="method" value="X-ray"/>
    <property type="resolution" value="2.25 A"/>
    <property type="chains" value="A/B/C/D=381-740"/>
</dbReference>
<dbReference type="PDB" id="5TKB">
    <property type="method" value="X-ray"/>
    <property type="resolution" value="2.16 A"/>
    <property type="chains" value="A/B/C/D=380-753"/>
</dbReference>
<dbReference type="PDB" id="5WH5">
    <property type="method" value="X-ray"/>
    <property type="resolution" value="1.80 A"/>
    <property type="chains" value="A/B=388-714"/>
</dbReference>
<dbReference type="PDB" id="5WH6">
    <property type="method" value="X-ray"/>
    <property type="resolution" value="1.60 A"/>
    <property type="chains" value="A/B=303-809"/>
</dbReference>
<dbReference type="PDB" id="5WQA">
    <property type="method" value="X-ray"/>
    <property type="resolution" value="2.30 A"/>
    <property type="chains" value="A/B=381-714"/>
</dbReference>
<dbReference type="PDB" id="6AKR">
    <property type="method" value="X-ray"/>
    <property type="resolution" value="2.33 A"/>
    <property type="chains" value="A/B/C/D=381-740"/>
</dbReference>
<dbReference type="PDB" id="6BOJ">
    <property type="method" value="X-ray"/>
    <property type="resolution" value="1.70 A"/>
    <property type="chains" value="A/B/C/D=380-718, A/B/C/D=730-734"/>
</dbReference>
<dbReference type="PDB" id="6F6U">
    <property type="method" value="X-ray"/>
    <property type="resolution" value="1.83 A"/>
    <property type="chains" value="A/B=380-714"/>
</dbReference>
<dbReference type="PDB" id="6F8R">
    <property type="method" value="X-ray"/>
    <property type="resolution" value="1.83 A"/>
    <property type="chains" value="A/B=380-714"/>
</dbReference>
<dbReference type="PDB" id="6F8T">
    <property type="method" value="X-ray"/>
    <property type="resolution" value="1.80 A"/>
    <property type="chains" value="A/B=380-714"/>
</dbReference>
<dbReference type="PDB" id="6F8U">
    <property type="method" value="X-ray"/>
    <property type="resolution" value="2.10 A"/>
    <property type="chains" value="A/B=380-714"/>
</dbReference>
<dbReference type="PDB" id="6F8V">
    <property type="method" value="X-ray"/>
    <property type="resolution" value="1.85 A"/>
    <property type="chains" value="A/B=380-714"/>
</dbReference>
<dbReference type="PDB" id="6F8W">
    <property type="method" value="X-ray"/>
    <property type="resolution" value="1.60 A"/>
    <property type="chains" value="A/B=380-714"/>
</dbReference>
<dbReference type="PDB" id="6F8X">
    <property type="method" value="X-ray"/>
    <property type="resolution" value="1.95 A"/>
    <property type="chains" value="A/B=380-715"/>
</dbReference>
<dbReference type="PDB" id="6FDC">
    <property type="method" value="X-ray"/>
    <property type="resolution" value="1.45 A"/>
    <property type="chains" value="A/B=380-714"/>
</dbReference>
<dbReference type="PDB" id="6FDI">
    <property type="method" value="X-ray"/>
    <property type="resolution" value="1.90 A"/>
    <property type="chains" value="A/B/C/D=381-740"/>
</dbReference>
<dbReference type="PDB" id="6FE7">
    <property type="method" value="X-ray"/>
    <property type="resolution" value="2.00 A"/>
    <property type="chains" value="A/B/C/D=381-740"/>
</dbReference>
<dbReference type="PDB" id="6FEB">
    <property type="method" value="X-ray"/>
    <property type="resolution" value="1.93 A"/>
    <property type="chains" value="A/B=381-740"/>
</dbReference>
<dbReference type="PDB" id="6FET">
    <property type="method" value="X-ray"/>
    <property type="resolution" value="1.88 A"/>
    <property type="chains" value="A/B/C/D=381-740"/>
</dbReference>
<dbReference type="PDB" id="6FT0">
    <property type="method" value="X-ray"/>
    <property type="resolution" value="2.10 A"/>
    <property type="chains" value="A/B/C/D=381-740"/>
</dbReference>
<dbReference type="PDB" id="6FTA">
    <property type="method" value="X-ray"/>
    <property type="resolution" value="2.34 A"/>
    <property type="chains" value="A/B/C/D=381-740"/>
</dbReference>
<dbReference type="PDB" id="6FTW">
    <property type="method" value="X-ray"/>
    <property type="resolution" value="2.16 A"/>
    <property type="chains" value="A/B/C/D=381-740"/>
</dbReference>
<dbReference type="PDB" id="6FW3">
    <property type="method" value="X-ray"/>
    <property type="resolution" value="1.78 A"/>
    <property type="chains" value="A/B/C/D=381-740"/>
</dbReference>
<dbReference type="PDB" id="6HWO">
    <property type="method" value="X-ray"/>
    <property type="resolution" value="1.99 A"/>
    <property type="chains" value="A/B/C/D=381-740"/>
</dbReference>
<dbReference type="PDB" id="6IAG">
    <property type="method" value="X-ray"/>
    <property type="resolution" value="2.00 A"/>
    <property type="chains" value="A/B/C/D=381-740"/>
</dbReference>
<dbReference type="PDB" id="6IBF">
    <property type="method" value="X-ray"/>
    <property type="resolution" value="2.31 A"/>
    <property type="chains" value="A/B/C/D=381-740"/>
</dbReference>
<dbReference type="PDB" id="6IM6">
    <property type="method" value="X-ray"/>
    <property type="resolution" value="1.70 A"/>
    <property type="chains" value="A/B=388-715"/>
</dbReference>
<dbReference type="PDB" id="6IMB">
    <property type="method" value="X-ray"/>
    <property type="resolution" value="1.55 A"/>
    <property type="chains" value="A/B=388-715"/>
</dbReference>
<dbReference type="PDB" id="6IMD">
    <property type="method" value="X-ray"/>
    <property type="resolution" value="1.50 A"/>
    <property type="chains" value="A/B=388-715"/>
</dbReference>
<dbReference type="PDB" id="6IMI">
    <property type="method" value="X-ray"/>
    <property type="resolution" value="1.46 A"/>
    <property type="chains" value="A/B=388-715"/>
</dbReference>
<dbReference type="PDB" id="6IMO">
    <property type="method" value="X-ray"/>
    <property type="resolution" value="1.55 A"/>
    <property type="chains" value="A/B=388-715"/>
</dbReference>
<dbReference type="PDB" id="6IMR">
    <property type="method" value="X-ray"/>
    <property type="resolution" value="1.50 A"/>
    <property type="chains" value="A/B=388-715"/>
</dbReference>
<dbReference type="PDB" id="6IMT">
    <property type="method" value="X-ray"/>
    <property type="resolution" value="1.48 A"/>
    <property type="chains" value="A/B=388-715"/>
</dbReference>
<dbReference type="PDB" id="6IND">
    <property type="method" value="X-ray"/>
    <property type="resolution" value="1.87 A"/>
    <property type="chains" value="A/B=388-715"/>
</dbReference>
<dbReference type="PDB" id="6INK">
    <property type="method" value="X-ray"/>
    <property type="resolution" value="1.70 A"/>
    <property type="chains" value="A/B=388-715"/>
</dbReference>
<dbReference type="PDB" id="6INM">
    <property type="method" value="X-ray"/>
    <property type="resolution" value="2.00 A"/>
    <property type="chains" value="A/B=388-715"/>
</dbReference>
<dbReference type="PDB" id="6KJZ">
    <property type="method" value="X-ray"/>
    <property type="resolution" value="2.20 A"/>
    <property type="chains" value="A/B=387-714"/>
</dbReference>
<dbReference type="PDB" id="6KK0">
    <property type="method" value="X-ray"/>
    <property type="resolution" value="2.20 A"/>
    <property type="chains" value="A/B=388-713"/>
</dbReference>
<dbReference type="PDB" id="6LRM">
    <property type="method" value="X-ray"/>
    <property type="resolution" value="1.45 A"/>
    <property type="chains" value="A/B=388-715"/>
</dbReference>
<dbReference type="PDB" id="6NJH">
    <property type="method" value="X-ray"/>
    <property type="resolution" value="2.15 A"/>
    <property type="chains" value="A/B/C/D=326-339, A/B/C/D=380-718"/>
</dbReference>
<dbReference type="PDB" id="6NJI">
    <property type="method" value="X-ray"/>
    <property type="resolution" value="2.45 A"/>
    <property type="chains" value="A/B=326-339, A/B=380-718"/>
</dbReference>
<dbReference type="PDB" id="6NJJ">
    <property type="method" value="X-ray"/>
    <property type="resolution" value="2.30 A"/>
    <property type="chains" value="A/B/C/D=326-339, A/B/C/D=380-718"/>
</dbReference>
<dbReference type="PDB" id="6RCW">
    <property type="method" value="X-ray"/>
    <property type="resolution" value="2.08 A"/>
    <property type="chains" value="A/B/C/D=381-740"/>
</dbReference>
<dbReference type="PDB" id="6ZBA">
    <property type="method" value="X-ray"/>
    <property type="resolution" value="1.60 A"/>
    <property type="chains" value="AAA/BBB/CCC/DDD=381-738"/>
</dbReference>
<dbReference type="PDB" id="7A8Q">
    <property type="method" value="X-ray"/>
    <property type="resolution" value="2.24 A"/>
    <property type="chains" value="A/B/C/D=381-740"/>
</dbReference>
<dbReference type="PDB" id="7A9V">
    <property type="method" value="X-ray"/>
    <property type="resolution" value="2.17 A"/>
    <property type="chains" value="A/B/C/D=381-740"/>
</dbReference>
<dbReference type="PDB" id="7AAG">
    <property type="method" value="X-ray"/>
    <property type="resolution" value="1.79 A"/>
    <property type="chains" value="A/B/C/D=381-740"/>
</dbReference>
<dbReference type="PDB" id="7AB9">
    <property type="method" value="X-ray"/>
    <property type="resolution" value="2.19 A"/>
    <property type="chains" value="A/B/C/D=381-740"/>
</dbReference>
<dbReference type="PDB" id="7ABD">
    <property type="method" value="X-ray"/>
    <property type="resolution" value="2.41 A"/>
    <property type="chains" value="A/B/C/D=381-740"/>
</dbReference>
<dbReference type="PDB" id="7ABE">
    <property type="method" value="X-ray"/>
    <property type="resolution" value="1.83 A"/>
    <property type="chains" value="A/B/C/D=381-740"/>
</dbReference>
<dbReference type="PDB" id="7ABJ">
    <property type="method" value="X-ray"/>
    <property type="resolution" value="2.11 A"/>
    <property type="chains" value="A/B/C/D=381-740"/>
</dbReference>
<dbReference type="PDB" id="7AY6">
    <property type="method" value="X-ray"/>
    <property type="resolution" value="1.66 A"/>
    <property type="chains" value="A/B=380-714"/>
</dbReference>
<dbReference type="PDB" id="7B9H">
    <property type="method" value="X-ray"/>
    <property type="resolution" value="1.50 A"/>
    <property type="chains" value="A/B=380-714"/>
</dbReference>
<dbReference type="PDB" id="7CBJ">
    <property type="method" value="X-ray"/>
    <property type="resolution" value="1.50 A"/>
    <property type="chains" value="A/B=388-715"/>
</dbReference>
<dbReference type="PDB" id="7CBQ">
    <property type="method" value="X-ray"/>
    <property type="resolution" value="1.59 A"/>
    <property type="chains" value="A/B=388-715"/>
</dbReference>
<dbReference type="PDB" id="7F2K">
    <property type="method" value="X-ray"/>
    <property type="resolution" value="2.10 A"/>
    <property type="chains" value="A/B=303-809"/>
</dbReference>
<dbReference type="PDB" id="7F2L">
    <property type="method" value="X-ray"/>
    <property type="resolution" value="2.10 A"/>
    <property type="chains" value="A/B=303-809"/>
</dbReference>
<dbReference type="PDB" id="7F2M">
    <property type="method" value="X-ray"/>
    <property type="resolution" value="2.20 A"/>
    <property type="chains" value="A/B=303-809"/>
</dbReference>
<dbReference type="PDB" id="7W4X">
    <property type="method" value="X-ray"/>
    <property type="resolution" value="2.20 A"/>
    <property type="chains" value="A/B=380-751"/>
</dbReference>
<dbReference type="PDB" id="7W4Y">
    <property type="method" value="X-ray"/>
    <property type="resolution" value="2.10 A"/>
    <property type="chains" value="A/B=380-751"/>
</dbReference>
<dbReference type="PDB" id="7XAA">
    <property type="method" value="X-ray"/>
    <property type="resolution" value="2.10 A"/>
    <property type="chains" value="A/B=303-809"/>
</dbReference>
<dbReference type="PDB" id="7XAB">
    <property type="method" value="X-ray"/>
    <property type="resolution" value="2.00 A"/>
    <property type="chains" value="A/B=303-809"/>
</dbReference>
<dbReference type="PDB" id="7XBB">
    <property type="method" value="X-ray"/>
    <property type="resolution" value="2.10 A"/>
    <property type="chains" value="A/B=303-809"/>
</dbReference>
<dbReference type="PDB" id="7YQF">
    <property type="method" value="X-ray"/>
    <property type="resolution" value="1.54 A"/>
    <property type="chains" value="A/B=388-715"/>
</dbReference>
<dbReference type="PDB" id="7YSX">
    <property type="method" value="X-ray"/>
    <property type="resolution" value="1.65 A"/>
    <property type="chains" value="A/B=388-715"/>
</dbReference>
<dbReference type="PDB" id="8K4C">
    <property type="method" value="X-ray"/>
    <property type="resolution" value="2.10 A"/>
    <property type="chains" value="A/B=388-715"/>
</dbReference>
<dbReference type="PDB" id="8K4H">
    <property type="method" value="X-ray"/>
    <property type="resolution" value="1.95 A"/>
    <property type="chains" value="A/B=388-715"/>
</dbReference>
<dbReference type="PDB" id="8W4Q">
    <property type="method" value="X-ray"/>
    <property type="resolution" value="1.55 A"/>
    <property type="chains" value="A/B=388-715"/>
</dbReference>
<dbReference type="PDB" id="8W4R">
    <property type="method" value="X-ray"/>
    <property type="resolution" value="1.37 A"/>
    <property type="chains" value="A/B=388-715"/>
</dbReference>
<dbReference type="PDB" id="8WDN">
    <property type="method" value="X-ray"/>
    <property type="resolution" value="1.55 A"/>
    <property type="chains" value="A/B=388-715"/>
</dbReference>
<dbReference type="PDB" id="8WDO">
    <property type="method" value="X-ray"/>
    <property type="resolution" value="1.67 A"/>
    <property type="chains" value="A/B=388-715"/>
</dbReference>
<dbReference type="PDB" id="8XXS">
    <property type="method" value="X-ray"/>
    <property type="resolution" value="2.10 A"/>
    <property type="chains" value="A/B=381-714"/>
</dbReference>
<dbReference type="PDB" id="8YLC">
    <property type="method" value="X-ray"/>
    <property type="resolution" value="2.30 A"/>
    <property type="chains" value="A/B=303-808"/>
</dbReference>
<dbReference type="PDB" id="8ZQ1">
    <property type="method" value="X-ray"/>
    <property type="resolution" value="2.20 A"/>
    <property type="chains" value="A/B=303-808"/>
</dbReference>
<dbReference type="PDB" id="8ZQ2">
    <property type="method" value="X-ray"/>
    <property type="resolution" value="2.10 A"/>
    <property type="chains" value="A/B=303-808"/>
</dbReference>
<dbReference type="PDB" id="8ZQU">
    <property type="method" value="X-ray"/>
    <property type="resolution" value="2.00 A"/>
    <property type="chains" value="A/B=303-808"/>
</dbReference>
<dbReference type="PDB" id="8ZQW">
    <property type="method" value="X-ray"/>
    <property type="resolution" value="2.10 A"/>
    <property type="chains" value="A/B=303-808"/>
</dbReference>
<dbReference type="PDBsum" id="1E9K"/>
<dbReference type="PDBsum" id="1MKD"/>
<dbReference type="PDBsum" id="1OYN"/>
<dbReference type="PDBsum" id="1PTW"/>
<dbReference type="PDBsum" id="1Q9M"/>
<dbReference type="PDBsum" id="1TB7"/>
<dbReference type="PDBsum" id="1TBB"/>
<dbReference type="PDBsum" id="1XOM"/>
<dbReference type="PDBsum" id="1XON"/>
<dbReference type="PDBsum" id="1XOQ"/>
<dbReference type="PDBsum" id="1XOR"/>
<dbReference type="PDBsum" id="1Y2B"/>
<dbReference type="PDBsum" id="1Y2C"/>
<dbReference type="PDBsum" id="1Y2D"/>
<dbReference type="PDBsum" id="1Y2E"/>
<dbReference type="PDBsum" id="1Y2K"/>
<dbReference type="PDBsum" id="1ZKN"/>
<dbReference type="PDBsum" id="2FM0"/>
<dbReference type="PDBsum" id="2FM5"/>
<dbReference type="PDBsum" id="2PW3"/>
<dbReference type="PDBsum" id="2QYN"/>
<dbReference type="PDBsum" id="3G4G"/>
<dbReference type="PDBsum" id="3G4I"/>
<dbReference type="PDBsum" id="3G4K"/>
<dbReference type="PDBsum" id="3G4L"/>
<dbReference type="PDBsum" id="3G58"/>
<dbReference type="PDBsum" id="3IAD"/>
<dbReference type="PDBsum" id="3IAK"/>
<dbReference type="PDBsum" id="3K4S"/>
<dbReference type="PDBsum" id="3SL3"/>
<dbReference type="PDBsum" id="3SL4"/>
<dbReference type="PDBsum" id="3SL5"/>
<dbReference type="PDBsum" id="3SL6"/>
<dbReference type="PDBsum" id="3SL8"/>
<dbReference type="PDBsum" id="3V9B"/>
<dbReference type="PDBsum" id="4OGB"/>
<dbReference type="PDBsum" id="4W1O"/>
<dbReference type="PDBsum" id="4WCU"/>
<dbReference type="PDBsum" id="5K1I"/>
<dbReference type="PDBsum" id="5K32"/>
<dbReference type="PDBsum" id="5LBO"/>
<dbReference type="PDBsum" id="5TKB"/>
<dbReference type="PDBsum" id="5WH5"/>
<dbReference type="PDBsum" id="5WH6"/>
<dbReference type="PDBsum" id="5WQA"/>
<dbReference type="PDBsum" id="6AKR"/>
<dbReference type="PDBsum" id="6BOJ"/>
<dbReference type="PDBsum" id="6F6U"/>
<dbReference type="PDBsum" id="6F8R"/>
<dbReference type="PDBsum" id="6F8T"/>
<dbReference type="PDBsum" id="6F8U"/>
<dbReference type="PDBsum" id="6F8V"/>
<dbReference type="PDBsum" id="6F8W"/>
<dbReference type="PDBsum" id="6F8X"/>
<dbReference type="PDBsum" id="6FDC"/>
<dbReference type="PDBsum" id="6FDI"/>
<dbReference type="PDBsum" id="6FE7"/>
<dbReference type="PDBsum" id="6FEB"/>
<dbReference type="PDBsum" id="6FET"/>
<dbReference type="PDBsum" id="6FT0"/>
<dbReference type="PDBsum" id="6FTA"/>
<dbReference type="PDBsum" id="6FTW"/>
<dbReference type="PDBsum" id="6FW3"/>
<dbReference type="PDBsum" id="6HWO"/>
<dbReference type="PDBsum" id="6IAG"/>
<dbReference type="PDBsum" id="6IBF"/>
<dbReference type="PDBsum" id="6IM6"/>
<dbReference type="PDBsum" id="6IMB"/>
<dbReference type="PDBsum" id="6IMD"/>
<dbReference type="PDBsum" id="6IMI"/>
<dbReference type="PDBsum" id="6IMO"/>
<dbReference type="PDBsum" id="6IMR"/>
<dbReference type="PDBsum" id="6IMT"/>
<dbReference type="PDBsum" id="6IND"/>
<dbReference type="PDBsum" id="6INK"/>
<dbReference type="PDBsum" id="6INM"/>
<dbReference type="PDBsum" id="6KJZ"/>
<dbReference type="PDBsum" id="6KK0"/>
<dbReference type="PDBsum" id="6LRM"/>
<dbReference type="PDBsum" id="6NJH"/>
<dbReference type="PDBsum" id="6NJI"/>
<dbReference type="PDBsum" id="6NJJ"/>
<dbReference type="PDBsum" id="6RCW"/>
<dbReference type="PDBsum" id="6ZBA"/>
<dbReference type="PDBsum" id="7A8Q"/>
<dbReference type="PDBsum" id="7A9V"/>
<dbReference type="PDBsum" id="7AAG"/>
<dbReference type="PDBsum" id="7AB9"/>
<dbReference type="PDBsum" id="7ABD"/>
<dbReference type="PDBsum" id="7ABE"/>
<dbReference type="PDBsum" id="7ABJ"/>
<dbReference type="PDBsum" id="7AY6"/>
<dbReference type="PDBsum" id="7B9H"/>
<dbReference type="PDBsum" id="7CBJ"/>
<dbReference type="PDBsum" id="7CBQ"/>
<dbReference type="PDBsum" id="7F2K"/>
<dbReference type="PDBsum" id="7F2L"/>
<dbReference type="PDBsum" id="7F2M"/>
<dbReference type="PDBsum" id="7W4X"/>
<dbReference type="PDBsum" id="7W4Y"/>
<dbReference type="PDBsum" id="7XAA"/>
<dbReference type="PDBsum" id="7XAB"/>
<dbReference type="PDBsum" id="7XBB"/>
<dbReference type="PDBsum" id="7YQF"/>
<dbReference type="PDBsum" id="7YSX"/>
<dbReference type="PDBsum" id="8K4C"/>
<dbReference type="PDBsum" id="8K4H"/>
<dbReference type="PDBsum" id="8W4Q"/>
<dbReference type="PDBsum" id="8W4R"/>
<dbReference type="PDBsum" id="8WDN"/>
<dbReference type="PDBsum" id="8WDO"/>
<dbReference type="PDBsum" id="8XXS"/>
<dbReference type="PDBsum" id="8YLC"/>
<dbReference type="PDBsum" id="8ZQ1"/>
<dbReference type="PDBsum" id="8ZQ2"/>
<dbReference type="PDBsum" id="8ZQU"/>
<dbReference type="PDBsum" id="8ZQW"/>
<dbReference type="SMR" id="Q08499"/>
<dbReference type="BioGRID" id="111170">
    <property type="interactions" value="71"/>
</dbReference>
<dbReference type="CORUM" id="Q08499"/>
<dbReference type="DIP" id="DIP-41115N"/>
<dbReference type="FunCoup" id="Q08499">
    <property type="interactions" value="1631"/>
</dbReference>
<dbReference type="IntAct" id="Q08499">
    <property type="interactions" value="39"/>
</dbReference>
<dbReference type="MINT" id="Q08499"/>
<dbReference type="STRING" id="9606.ENSP00000345502"/>
<dbReference type="BindingDB" id="Q08499"/>
<dbReference type="ChEMBL" id="CHEMBL288"/>
<dbReference type="DrugBank" id="DB06842">
    <property type="generic name" value="(4R)-4-(3-butoxy-4-methoxybenzyl)imidazolidin-2-one"/>
</dbReference>
<dbReference type="DrugBank" id="DB04149">
    <property type="generic name" value="(R)-Rolipram"/>
</dbReference>
<dbReference type="DrugBank" id="DB03606">
    <property type="generic name" value="(S)-Rolipram"/>
</dbReference>
<dbReference type="DrugBank" id="DB03183">
    <property type="generic name" value="1-(4-Aminophenyl)-3,5-Dimethyl-1h-Pyrazole-4-Carboxylic Acid Ethyl Ester"/>
</dbReference>
<dbReference type="DrugBank" id="DB04469">
    <property type="generic name" value="1-(4-Methoxyphenyl)-3,5-Dimethyl-1h-Pyrazole-4-Carboxylic Acid Ethyl Ester"/>
</dbReference>
<dbReference type="DrugBank" id="DB02676">
    <property type="generic name" value="2-[3-(2-Hydroxy-1,1-Dihydroxymethyl-Ethylamino)-Propylamino]-2-Hydroxymethyl-Propane-1,3-Diol"/>
</dbReference>
<dbReference type="DrugBank" id="DB01959">
    <property type="generic name" value="3,5-Dimethyl-1-(3-Nitrophenyl)-1h-Pyrazole-4-Carboxylic Acid Ethyl Ester"/>
</dbReference>
<dbReference type="DrugBank" id="DB07051">
    <property type="generic name" value="3,5-DIMETHYL-1-PHENYL-1H-PYRAZOLE-4-CARBOXYLIC ACID ETHYL ESTER"/>
</dbReference>
<dbReference type="DrugBank" id="DB04271">
    <property type="generic name" value="3,5-Dimethyl-1h-Pyrazole-4-Carboxylic Acid Ethyl Ester"/>
</dbReference>
<dbReference type="DrugBank" id="DB07954">
    <property type="generic name" value="3-isobutyl-1-methyl-7H-xanthine"/>
</dbReference>
<dbReference type="DrugBank" id="DB08299">
    <property type="generic name" value="4-[8-(3-nitrophenyl)-1,7-naphthyridin-6-yl]benzoic acid"/>
</dbReference>
<dbReference type="DrugBank" id="DB00131">
    <property type="generic name" value="Adenosine phosphate"/>
</dbReference>
<dbReference type="DrugBank" id="DB01427">
    <property type="generic name" value="Amrinone"/>
</dbReference>
<dbReference type="DrugBank" id="DB16039">
    <property type="generic name" value="AN2898"/>
</dbReference>
<dbReference type="DrugBank" id="DB00201">
    <property type="generic name" value="Caffeine"/>
</dbReference>
<dbReference type="DrugBank" id="DB15640">
    <property type="generic name" value="CDC-801"/>
</dbReference>
<dbReference type="DrugBank" id="DB03849">
    <property type="generic name" value="Cilomilast"/>
</dbReference>
<dbReference type="DrugBank" id="DB05219">
    <property type="generic name" value="Crisaborole"/>
</dbReference>
<dbReference type="DrugBank" id="DB01647">
    <property type="generic name" value="Daxalipram"/>
</dbReference>
<dbReference type="DrugBank" id="DB00651">
    <property type="generic name" value="Dyphylline"/>
</dbReference>
<dbReference type="DrugBank" id="DB16157">
    <property type="generic name" value="Ensifentrine"/>
</dbReference>
<dbReference type="DrugBank" id="DB06246">
    <property type="generic name" value="Exisulind"/>
</dbReference>
<dbReference type="DrugBank" id="DB12542">
    <property type="generic name" value="GSK-356278"/>
</dbReference>
<dbReference type="DrugBank" id="DB11650">
    <property type="generic name" value="HT-0712"/>
</dbReference>
<dbReference type="DrugBank" id="DB05266">
    <property type="generic name" value="Ibudilast"/>
</dbReference>
<dbReference type="DrugBank" id="DB01088">
    <property type="generic name" value="Iloprost"/>
</dbReference>
<dbReference type="DrugBank" id="DB13029">
    <property type="generic name" value="MK-0873"/>
</dbReference>
<dbReference type="DrugBank" id="DB12375">
    <property type="generic name" value="Oglemilast"/>
</dbReference>
<dbReference type="DrugBank" id="DB01113">
    <property type="generic name" value="Papaverine"/>
</dbReference>
<dbReference type="DrugBank" id="DB01791">
    <property type="generic name" value="Piclamilast"/>
</dbReference>
<dbReference type="DrugBank" id="DB11838">
    <property type="generic name" value="Revamilast"/>
</dbReference>
<dbReference type="DrugBank" id="DB01656">
    <property type="generic name" value="Roflumilast"/>
</dbReference>
<dbReference type="DrugBank" id="DB01954">
    <property type="generic name" value="Rolipram"/>
</dbReference>
<dbReference type="DrugBank" id="DB05298">
    <property type="generic name" value="Tetomilast"/>
</dbReference>
<dbReference type="DrugBank" id="DB11681">
    <property type="generic name" value="Tofimilast"/>
</dbReference>
<dbReference type="DrugBank" id="DB09283">
    <property type="generic name" value="Trapidil"/>
</dbReference>
<dbReference type="DrugBank" id="DB02918">
    <property type="generic name" value="Zardaverine"/>
</dbReference>
<dbReference type="DrugBank" id="DB14790">
    <property type="generic name" value="Zatolmilast"/>
</dbReference>
<dbReference type="DrugCentral" id="Q08499"/>
<dbReference type="GuidetoPHARMACOLOGY" id="1303"/>
<dbReference type="GlyGen" id="Q08499">
    <property type="glycosylation" value="1 site, 1 O-linked glycan (1 site)"/>
</dbReference>
<dbReference type="iPTMnet" id="Q08499"/>
<dbReference type="PhosphoSitePlus" id="Q08499"/>
<dbReference type="BioMuta" id="PDE4D"/>
<dbReference type="DMDM" id="12644392"/>
<dbReference type="jPOST" id="Q08499"/>
<dbReference type="MassIVE" id="Q08499"/>
<dbReference type="PaxDb" id="9606-ENSP00000345502"/>
<dbReference type="PeptideAtlas" id="Q08499"/>
<dbReference type="ProteomicsDB" id="58620">
    <molecule id="Q08499-1"/>
</dbReference>
<dbReference type="ProteomicsDB" id="58621">
    <molecule id="Q08499-10"/>
</dbReference>
<dbReference type="ProteomicsDB" id="58622">
    <molecule id="Q08499-11"/>
</dbReference>
<dbReference type="ProteomicsDB" id="58623">
    <molecule id="Q08499-12"/>
</dbReference>
<dbReference type="ProteomicsDB" id="58624">
    <molecule id="Q08499-2"/>
</dbReference>
<dbReference type="ProteomicsDB" id="58625">
    <molecule id="Q08499-3"/>
</dbReference>
<dbReference type="ProteomicsDB" id="58626">
    <molecule id="Q08499-4"/>
</dbReference>
<dbReference type="ProteomicsDB" id="58627">
    <molecule id="Q08499-5"/>
</dbReference>
<dbReference type="ProteomicsDB" id="58628">
    <molecule id="Q08499-6"/>
</dbReference>
<dbReference type="ProteomicsDB" id="58629">
    <molecule id="Q08499-7"/>
</dbReference>
<dbReference type="ProteomicsDB" id="58630">
    <molecule id="Q08499-8"/>
</dbReference>
<dbReference type="ProteomicsDB" id="58631">
    <molecule id="Q08499-9"/>
</dbReference>
<dbReference type="Pumba" id="Q08499"/>
<dbReference type="Antibodypedia" id="23607">
    <property type="antibodies" value="546 antibodies from 38 providers"/>
</dbReference>
<dbReference type="DNASU" id="5144"/>
<dbReference type="Ensembl" id="ENST00000309641.10">
    <molecule id="Q08499-7"/>
    <property type="protein sequence ID" value="ENSP00000308485.6"/>
    <property type="gene ID" value="ENSG00000113448.21"/>
</dbReference>
<dbReference type="Ensembl" id="ENST00000317118.12">
    <molecule id="Q08499-8"/>
    <property type="protein sequence ID" value="ENSP00000321739.8"/>
    <property type="gene ID" value="ENSG00000113448.21"/>
</dbReference>
<dbReference type="Ensembl" id="ENST00000340635.11">
    <molecule id="Q08499-1"/>
    <property type="protein sequence ID" value="ENSP00000345502.6"/>
    <property type="gene ID" value="ENSG00000113448.21"/>
</dbReference>
<dbReference type="Ensembl" id="ENST00000358923.10">
    <molecule id="Q08499-5"/>
    <property type="protein sequence ID" value="ENSP00000351800.6"/>
    <property type="gene ID" value="ENSG00000113448.21"/>
</dbReference>
<dbReference type="Ensembl" id="ENST00000360047.9">
    <molecule id="Q08499-2"/>
    <property type="protein sequence ID" value="ENSP00000353152.5"/>
    <property type="gene ID" value="ENSG00000113448.21"/>
</dbReference>
<dbReference type="Ensembl" id="ENST00000405755.6">
    <molecule id="Q08499-9"/>
    <property type="protein sequence ID" value="ENSP00000384806.2"/>
    <property type="gene ID" value="ENSG00000113448.21"/>
</dbReference>
<dbReference type="Ensembl" id="ENST00000502484.6">
    <molecule id="Q08499-11"/>
    <property type="protein sequence ID" value="ENSP00000423094.2"/>
    <property type="gene ID" value="ENSG00000113448.21"/>
</dbReference>
<dbReference type="Ensembl" id="ENST00000502575.1">
    <molecule id="Q08499-12"/>
    <property type="protein sequence ID" value="ENSP00000425917.1"/>
    <property type="gene ID" value="ENSG00000113448.21"/>
</dbReference>
<dbReference type="Ensembl" id="ENST00000503258.5">
    <molecule id="Q08499-10"/>
    <property type="protein sequence ID" value="ENSP00000425605.1"/>
    <property type="gene ID" value="ENSG00000113448.21"/>
</dbReference>
<dbReference type="Ensembl" id="ENST00000507116.6">
    <molecule id="Q08499-6"/>
    <property type="protein sequence ID" value="ENSP00000424852.1"/>
    <property type="gene ID" value="ENSG00000113448.21"/>
</dbReference>
<dbReference type="GeneID" id="5144"/>
<dbReference type="KEGG" id="hsa:5144"/>
<dbReference type="MANE-Select" id="ENST00000340635.11">
    <property type="protein sequence ID" value="ENSP00000345502.6"/>
    <property type="RefSeq nucleotide sequence ID" value="NM_001104631.2"/>
    <property type="RefSeq protein sequence ID" value="NP_001098101.1"/>
</dbReference>
<dbReference type="UCSC" id="uc003jrs.4">
    <molecule id="Q08499-1"/>
    <property type="organism name" value="human"/>
</dbReference>
<dbReference type="AGR" id="HGNC:8783"/>
<dbReference type="CTD" id="5144"/>
<dbReference type="DisGeNET" id="5144"/>
<dbReference type="GeneCards" id="PDE4D"/>
<dbReference type="HGNC" id="HGNC:8783">
    <property type="gene designation" value="PDE4D"/>
</dbReference>
<dbReference type="HPA" id="ENSG00000113448">
    <property type="expression patterns" value="Tissue enhanced (bone)"/>
</dbReference>
<dbReference type="MalaCards" id="PDE4D"/>
<dbReference type="MIM" id="600129">
    <property type="type" value="gene"/>
</dbReference>
<dbReference type="MIM" id="614613">
    <property type="type" value="phenotype"/>
</dbReference>
<dbReference type="neXtProt" id="NX_Q08499"/>
<dbReference type="OpenTargets" id="ENSG00000113448"/>
<dbReference type="Orphanet" id="950">
    <property type="disease" value="Acrodysostosis"/>
</dbReference>
<dbReference type="Orphanet" id="439822">
    <property type="disease" value="PDE4D haploinsufficiency syndrome"/>
</dbReference>
<dbReference type="PharmGKB" id="PA33130"/>
<dbReference type="VEuPathDB" id="HostDB:ENSG00000113448"/>
<dbReference type="eggNOG" id="KOG3689">
    <property type="taxonomic scope" value="Eukaryota"/>
</dbReference>
<dbReference type="GeneTree" id="ENSGT00940000155674"/>
<dbReference type="HOGENOM" id="CLU_005940_5_2_1"/>
<dbReference type="InParanoid" id="Q08499"/>
<dbReference type="OMA" id="KEQPPCA"/>
<dbReference type="OrthoDB" id="189220at2759"/>
<dbReference type="PAN-GO" id="Q08499">
    <property type="GO annotations" value="9 GO annotations based on evolutionary models"/>
</dbReference>
<dbReference type="PhylomeDB" id="Q08499"/>
<dbReference type="TreeFam" id="TF314638"/>
<dbReference type="BRENDA" id="3.1.4.53">
    <property type="organism ID" value="2681"/>
</dbReference>
<dbReference type="PathwayCommons" id="Q08499"/>
<dbReference type="Reactome" id="R-HSA-180024">
    <property type="pathway name" value="DARPP-32 events"/>
</dbReference>
<dbReference type="Reactome" id="R-HSA-418555">
    <property type="pathway name" value="G alpha (s) signalling events"/>
</dbReference>
<dbReference type="Reactome" id="R-HSA-9860927">
    <molecule id="Q08499-6"/>
    <property type="pathway name" value="Turbulent (oscillatory, disturbed) flow shear stress activates signaling by PIEZO1 and integrins in endothelial cells"/>
</dbReference>
<dbReference type="SABIO-RK" id="Q08499"/>
<dbReference type="SignaLink" id="Q08499"/>
<dbReference type="SIGNOR" id="Q08499"/>
<dbReference type="UniPathway" id="UPA00762">
    <property type="reaction ID" value="UER00747"/>
</dbReference>
<dbReference type="BioGRID-ORCS" id="5144">
    <property type="hits" value="19 hits in 1159 CRISPR screens"/>
</dbReference>
<dbReference type="ChiTaRS" id="PDE4D">
    <property type="organism name" value="human"/>
</dbReference>
<dbReference type="EvolutionaryTrace" id="Q08499"/>
<dbReference type="GeneWiki" id="PDE4D"/>
<dbReference type="GenomeRNAi" id="5144"/>
<dbReference type="Pharos" id="Q08499">
    <property type="development level" value="Tclin"/>
</dbReference>
<dbReference type="PRO" id="PR:Q08499"/>
<dbReference type="Proteomes" id="UP000005640">
    <property type="component" value="Chromosome 5"/>
</dbReference>
<dbReference type="RNAct" id="Q08499">
    <property type="molecule type" value="protein"/>
</dbReference>
<dbReference type="Bgee" id="ENSG00000113448">
    <property type="expression patterns" value="Expressed in gluteal muscle and 202 other cell types or tissues"/>
</dbReference>
<dbReference type="ExpressionAtlas" id="Q08499">
    <property type="expression patterns" value="baseline and differential"/>
</dbReference>
<dbReference type="GO" id="GO:0016324">
    <property type="term" value="C:apical plasma membrane"/>
    <property type="evidence" value="ECO:0007669"/>
    <property type="project" value="UniProtKB-SubCell"/>
</dbReference>
<dbReference type="GO" id="GO:0034704">
    <property type="term" value="C:calcium channel complex"/>
    <property type="evidence" value="ECO:0000314"/>
    <property type="project" value="BHF-UCL"/>
</dbReference>
<dbReference type="GO" id="GO:0005813">
    <property type="term" value="C:centrosome"/>
    <property type="evidence" value="ECO:0007669"/>
    <property type="project" value="UniProtKB-SubCell"/>
</dbReference>
<dbReference type="GO" id="GO:0005929">
    <property type="term" value="C:cilium"/>
    <property type="evidence" value="ECO:0000314"/>
    <property type="project" value="HPA"/>
</dbReference>
<dbReference type="GO" id="GO:0005829">
    <property type="term" value="C:cytosol"/>
    <property type="evidence" value="ECO:0000314"/>
    <property type="project" value="BHF-UCL"/>
</dbReference>
<dbReference type="GO" id="GO:0016020">
    <property type="term" value="C:membrane"/>
    <property type="evidence" value="ECO:0000314"/>
    <property type="project" value="BHF-UCL"/>
</dbReference>
<dbReference type="GO" id="GO:0031965">
    <property type="term" value="C:nuclear membrane"/>
    <property type="evidence" value="ECO:0000314"/>
    <property type="project" value="HPA"/>
</dbReference>
<dbReference type="GO" id="GO:0005654">
    <property type="term" value="C:nucleoplasm"/>
    <property type="evidence" value="ECO:0000314"/>
    <property type="project" value="HPA"/>
</dbReference>
<dbReference type="GO" id="GO:0005886">
    <property type="term" value="C:plasma membrane"/>
    <property type="evidence" value="ECO:0000314"/>
    <property type="project" value="HPA"/>
</dbReference>
<dbReference type="GO" id="GO:0005891">
    <property type="term" value="C:voltage-gated calcium channel complex"/>
    <property type="evidence" value="ECO:0000250"/>
    <property type="project" value="BHF-UCL"/>
</dbReference>
<dbReference type="GO" id="GO:0004115">
    <property type="term" value="F:3',5'-cyclic-AMP phosphodiesterase activity"/>
    <property type="evidence" value="ECO:0000314"/>
    <property type="project" value="BHF-UCL"/>
</dbReference>
<dbReference type="GO" id="GO:0047555">
    <property type="term" value="F:3',5'-cyclic-GMP phosphodiesterase activity"/>
    <property type="evidence" value="ECO:0000318"/>
    <property type="project" value="GO_Central"/>
</dbReference>
<dbReference type="GO" id="GO:0004114">
    <property type="term" value="F:3',5'-cyclic-nucleotide phosphodiesterase activity"/>
    <property type="evidence" value="ECO:0000303"/>
    <property type="project" value="UniProtKB"/>
</dbReference>
<dbReference type="GO" id="GO:0051117">
    <property type="term" value="F:ATPase binding"/>
    <property type="evidence" value="ECO:0000353"/>
    <property type="project" value="BHF-UCL"/>
</dbReference>
<dbReference type="GO" id="GO:0031698">
    <property type="term" value="F:beta-2 adrenergic receptor binding"/>
    <property type="evidence" value="ECO:0000250"/>
    <property type="project" value="BHF-UCL"/>
</dbReference>
<dbReference type="GO" id="GO:0005246">
    <property type="term" value="F:calcium channel regulator activity"/>
    <property type="evidence" value="ECO:0000250"/>
    <property type="project" value="BHF-UCL"/>
</dbReference>
<dbReference type="GO" id="GO:0030552">
    <property type="term" value="F:cAMP binding"/>
    <property type="evidence" value="ECO:0000314"/>
    <property type="project" value="UniProtKB"/>
</dbReference>
<dbReference type="GO" id="GO:0019899">
    <property type="term" value="F:enzyme binding"/>
    <property type="evidence" value="ECO:0000250"/>
    <property type="project" value="BHF-UCL"/>
</dbReference>
<dbReference type="GO" id="GO:1901363">
    <property type="term" value="F:heterocyclic compound binding"/>
    <property type="evidence" value="ECO:0000353"/>
    <property type="project" value="BHF-UCL"/>
</dbReference>
<dbReference type="GO" id="GO:0046872">
    <property type="term" value="F:metal ion binding"/>
    <property type="evidence" value="ECO:0007669"/>
    <property type="project" value="UniProtKB-KW"/>
</dbReference>
<dbReference type="GO" id="GO:0097110">
    <property type="term" value="F:scaffold protein binding"/>
    <property type="evidence" value="ECO:0000353"/>
    <property type="project" value="BHF-UCL"/>
</dbReference>
<dbReference type="GO" id="GO:0030545">
    <property type="term" value="F:signaling receptor regulator activity"/>
    <property type="evidence" value="ECO:0000250"/>
    <property type="project" value="BHF-UCL"/>
</dbReference>
<dbReference type="GO" id="GO:0044325">
    <property type="term" value="F:transmembrane transporter binding"/>
    <property type="evidence" value="ECO:0000353"/>
    <property type="project" value="BHF-UCL"/>
</dbReference>
<dbReference type="GO" id="GO:0071875">
    <property type="term" value="P:adrenergic receptor signaling pathway"/>
    <property type="evidence" value="ECO:0000250"/>
    <property type="project" value="BHF-UCL"/>
</dbReference>
<dbReference type="GO" id="GO:0006198">
    <property type="term" value="P:cAMP catabolic process"/>
    <property type="evidence" value="ECO:0007669"/>
    <property type="project" value="UniProtKB-UniPathway"/>
</dbReference>
<dbReference type="GO" id="GO:0019933">
    <property type="term" value="P:cAMP-mediated signaling"/>
    <property type="evidence" value="ECO:0000318"/>
    <property type="project" value="GO_Central"/>
</dbReference>
<dbReference type="GO" id="GO:0071320">
    <property type="term" value="P:cellular response to cAMP"/>
    <property type="evidence" value="ECO:0000314"/>
    <property type="project" value="BHF-UCL"/>
</dbReference>
<dbReference type="GO" id="GO:0071872">
    <property type="term" value="P:cellular response to epinephrine stimulus"/>
    <property type="evidence" value="ECO:0000314"/>
    <property type="project" value="BHF-UCL"/>
</dbReference>
<dbReference type="GO" id="GO:0061028">
    <property type="term" value="P:establishment of endothelial barrier"/>
    <property type="evidence" value="ECO:0000250"/>
    <property type="project" value="UniProtKB"/>
</dbReference>
<dbReference type="GO" id="GO:0106072">
    <property type="term" value="P:negative regulation of adenylate cyclase-activating G protein-coupled receptor signaling pathway"/>
    <property type="evidence" value="ECO:0000314"/>
    <property type="project" value="BHF-UCL"/>
</dbReference>
<dbReference type="GO" id="GO:0045822">
    <property type="term" value="P:negative regulation of heart contraction"/>
    <property type="evidence" value="ECO:0000250"/>
    <property type="project" value="BHF-UCL"/>
</dbReference>
<dbReference type="GO" id="GO:1901898">
    <property type="term" value="P:negative regulation of relaxation of cardiac muscle"/>
    <property type="evidence" value="ECO:0000250"/>
    <property type="project" value="BHF-UCL"/>
</dbReference>
<dbReference type="GO" id="GO:0010460">
    <property type="term" value="P:positive regulation of heart rate"/>
    <property type="evidence" value="ECO:0000250"/>
    <property type="project" value="BHF-UCL"/>
</dbReference>
<dbReference type="GO" id="GO:0032743">
    <property type="term" value="P:positive regulation of interleukin-2 production"/>
    <property type="evidence" value="ECO:0000315"/>
    <property type="project" value="BHF-UCL"/>
</dbReference>
<dbReference type="GO" id="GO:0032754">
    <property type="term" value="P:positive regulation of interleukin-5 production"/>
    <property type="evidence" value="ECO:0000315"/>
    <property type="project" value="BHF-UCL"/>
</dbReference>
<dbReference type="GO" id="GO:0032729">
    <property type="term" value="P:positive regulation of type II interferon production"/>
    <property type="evidence" value="ECO:0000315"/>
    <property type="project" value="BHF-UCL"/>
</dbReference>
<dbReference type="GO" id="GO:1902514">
    <property type="term" value="P:regulation of calcium ion transmembrane transport via high voltage-gated calcium channel"/>
    <property type="evidence" value="ECO:0000250"/>
    <property type="project" value="BHF-UCL"/>
</dbReference>
<dbReference type="GO" id="GO:0086004">
    <property type="term" value="P:regulation of cardiac muscle cell contraction"/>
    <property type="evidence" value="ECO:0000250"/>
    <property type="project" value="BHF-UCL"/>
</dbReference>
<dbReference type="GO" id="GO:1901844">
    <property type="term" value="P:regulation of cell communication by electrical coupling involved in cardiac conduction"/>
    <property type="evidence" value="ECO:0000315"/>
    <property type="project" value="BHF-UCL"/>
</dbReference>
<dbReference type="GO" id="GO:0002027">
    <property type="term" value="P:regulation of heart rate"/>
    <property type="evidence" value="ECO:0000250"/>
    <property type="project" value="BHF-UCL"/>
</dbReference>
<dbReference type="GO" id="GO:0010880">
    <property type="term" value="P:regulation of release of sequestered calcium ion into cytosol by sarcoplasmic reticulum"/>
    <property type="evidence" value="ECO:0000250"/>
    <property type="project" value="BHF-UCL"/>
</dbReference>
<dbReference type="GO" id="GO:0050852">
    <property type="term" value="P:T cell receptor signaling pathway"/>
    <property type="evidence" value="ECO:0000315"/>
    <property type="project" value="BHF-UCL"/>
</dbReference>
<dbReference type="FunFam" id="1.10.1300.10:FF:000001">
    <property type="entry name" value="Phosphodiesterase"/>
    <property type="match status" value="1"/>
</dbReference>
<dbReference type="Gene3D" id="1.10.1300.10">
    <property type="entry name" value="3'5'-cyclic nucleotide phosphodiesterase, catalytic domain"/>
    <property type="match status" value="1"/>
</dbReference>
<dbReference type="InterPro" id="IPR040844">
    <property type="entry name" value="PDE4_UCR"/>
</dbReference>
<dbReference type="InterPro" id="IPR023088">
    <property type="entry name" value="PDEase"/>
</dbReference>
<dbReference type="InterPro" id="IPR002073">
    <property type="entry name" value="PDEase_catalytic_dom"/>
</dbReference>
<dbReference type="InterPro" id="IPR036971">
    <property type="entry name" value="PDEase_catalytic_dom_sf"/>
</dbReference>
<dbReference type="InterPro" id="IPR023174">
    <property type="entry name" value="PDEase_CS"/>
</dbReference>
<dbReference type="PANTHER" id="PTHR11347">
    <property type="entry name" value="CYCLIC NUCLEOTIDE PHOSPHODIESTERASE"/>
    <property type="match status" value="1"/>
</dbReference>
<dbReference type="Pfam" id="PF18100">
    <property type="entry name" value="PDE4_UCR"/>
    <property type="match status" value="1"/>
</dbReference>
<dbReference type="Pfam" id="PF00233">
    <property type="entry name" value="PDEase_I"/>
    <property type="match status" value="1"/>
</dbReference>
<dbReference type="PRINTS" id="PR00387">
    <property type="entry name" value="PDIESTERASE1"/>
</dbReference>
<dbReference type="SUPFAM" id="SSF109604">
    <property type="entry name" value="HD-domain/PDEase-like"/>
    <property type="match status" value="1"/>
</dbReference>
<dbReference type="PROSITE" id="PS00126">
    <property type="entry name" value="PDEASE_I_1"/>
    <property type="match status" value="1"/>
</dbReference>
<dbReference type="PROSITE" id="PS51845">
    <property type="entry name" value="PDEASE_I_2"/>
    <property type="match status" value="1"/>
</dbReference>